<keyword id="KW-0002">3D-structure</keyword>
<keyword id="KW-1072">Activation of host autophagy by virus</keyword>
<keyword id="KW-0067">ATP-binding</keyword>
<keyword id="KW-1015">Disulfide bond</keyword>
<keyword id="KW-0255">Endonuclease</keyword>
<keyword id="KW-0269">Exonuclease</keyword>
<keyword id="KW-0347">Helicase</keyword>
<keyword id="KW-1035">Host cytoplasm</keyword>
<keyword id="KW-1043">Host membrane</keyword>
<keyword id="KW-0945">Host-virus interaction</keyword>
<keyword id="KW-0378">Hydrolase</keyword>
<keyword id="KW-1090">Inhibition of host innate immune response by virus</keyword>
<keyword id="KW-1092">Inhibition of host IRF3 by virus</keyword>
<keyword id="KW-1113">Inhibition of host RLR pathway by virus</keyword>
<keyword id="KW-0456">Lyase</keyword>
<keyword id="KW-0472">Membrane</keyword>
<keyword id="KW-0479">Metal-binding</keyword>
<keyword id="KW-0489">Methyltransferase</keyword>
<keyword id="KW-1127">Modulation of host ubiquitin pathway by viral deubiquitinase</keyword>
<keyword id="KW-1130">Modulation of host ubiquitin pathway by virus</keyword>
<keyword id="KW-0540">Nuclease</keyword>
<keyword id="KW-0547">Nucleotide-binding</keyword>
<keyword id="KW-0548">Nucleotidyltransferase</keyword>
<keyword id="KW-0645">Protease</keyword>
<keyword id="KW-1185">Reference proteome</keyword>
<keyword id="KW-0677">Repeat</keyword>
<keyword id="KW-0688">Ribosomal frameshifting</keyword>
<keyword id="KW-0694">RNA-binding</keyword>
<keyword id="KW-0696">RNA-directed RNA polymerase</keyword>
<keyword id="KW-0788">Thiol protease</keyword>
<keyword id="KW-0808">Transferase</keyword>
<keyword id="KW-0812">Transmembrane</keyword>
<keyword id="KW-1133">Transmembrane helix</keyword>
<keyword id="KW-0833">Ubl conjugation pathway</keyword>
<keyword id="KW-0899">Viral immunoevasion</keyword>
<keyword id="KW-0693">Viral RNA replication</keyword>
<keyword id="KW-0862">Zinc</keyword>
<keyword id="KW-0863">Zinc-finger</keyword>
<accession>P0C6Y5</accession>
<accession>Q88508</accession>
<accession>Q9IW05</accession>
<accession>Q9IW06</accession>
<protein>
    <recommendedName>
        <fullName>Replicase polyprotein 1ab</fullName>
        <shortName>pp1ab</shortName>
    </recommendedName>
    <alternativeName>
        <fullName>ORF1ab polyprotein</fullName>
    </alternativeName>
    <component>
        <recommendedName>
            <fullName>Non-structural protein 1</fullName>
            <shortName>nsp1</shortName>
        </recommendedName>
        <alternativeName>
            <fullName>p9</fullName>
        </alternativeName>
    </component>
    <component>
        <recommendedName>
            <fullName>Non-structural protein 2</fullName>
            <shortName>nsp2</shortName>
        </recommendedName>
        <alternativeName>
            <fullName>p87</fullName>
        </alternativeName>
    </component>
    <component>
        <recommendedName>
            <fullName>Non-structural protein 3</fullName>
            <shortName>nsp3</shortName>
            <ecNumber>3.4.19.12</ecNumber>
            <ecNumber>3.4.22.-</ecNumber>
        </recommendedName>
        <alternativeName>
            <fullName>PL1-PRO/PL2-PRO</fullName>
        </alternativeName>
        <alternativeName>
            <fullName>PLP1/PLP2</fullName>
        </alternativeName>
        <alternativeName>
            <fullName>Papain-like proteinases 1/2</fullName>
        </alternativeName>
        <alternativeName>
            <fullName>p195</fullName>
        </alternativeName>
    </component>
    <component>
        <recommendedName>
            <fullName>Non-structural protein 4</fullName>
            <shortName>nsp4</shortName>
        </recommendedName>
        <alternativeName>
            <fullName>Peptide HD2</fullName>
        </alternativeName>
    </component>
    <component>
        <recommendedName>
            <fullName>3C-like proteinase</fullName>
            <shortName>3CL-PRO</shortName>
            <shortName>3CLp</shortName>
            <ecNumber>3.4.22.-</ecNumber>
        </recommendedName>
        <alternativeName>
            <fullName>M-PRO</fullName>
        </alternativeName>
        <alternativeName>
            <fullName>nsp5</fullName>
        </alternativeName>
        <alternativeName>
            <fullName>p34</fullName>
        </alternativeName>
    </component>
    <component>
        <recommendedName>
            <fullName>Non-structural protein 6</fullName>
            <shortName>nsp6</shortName>
        </recommendedName>
    </component>
    <component>
        <recommendedName>
            <fullName>Non-structural protein 7</fullName>
            <shortName>nsp7</shortName>
        </recommendedName>
        <alternativeName>
            <fullName>p5</fullName>
        </alternativeName>
    </component>
    <component>
        <recommendedName>
            <fullName>Non-structural protein 8</fullName>
            <shortName>nsp8</shortName>
        </recommendedName>
        <alternativeName>
            <fullName>p23</fullName>
        </alternativeName>
    </component>
    <component>
        <recommendedName>
            <fullName>Viral protein genome-linked nsp9</fullName>
        </recommendedName>
        <alternativeName>
            <fullName>Non-structural protein 9</fullName>
            <shortName>nsp9</shortName>
        </alternativeName>
        <alternativeName>
            <fullName>RNA-capping enzyme subunit nsp9</fullName>
        </alternativeName>
        <alternativeName>
            <fullName>p12</fullName>
        </alternativeName>
    </component>
    <component>
        <recommendedName>
            <fullName>Non-structural protein 10</fullName>
            <shortName>nsp10</shortName>
        </recommendedName>
        <alternativeName>
            <fullName>Growth factor-like peptide</fullName>
            <shortName>GFL</shortName>
        </alternativeName>
        <alternativeName>
            <fullName>p14</fullName>
        </alternativeName>
    </component>
    <component>
        <recommendedName>
            <fullName>RNA-directed RNA polymerase nsp12</fullName>
            <shortName>Pol</shortName>
            <shortName>RdRp</shortName>
            <ecNumber>2.7.7.48</ecNumber>
            <ecNumber>2.7.7.50</ecNumber>
        </recommendedName>
        <alternativeName>
            <fullName>nsp12</fullName>
        </alternativeName>
        <alternativeName>
            <fullName>p100</fullName>
        </alternativeName>
    </component>
    <component>
        <recommendedName>
            <fullName>Helicase</fullName>
            <shortName>Hel</shortName>
            <ecNumber>3.6.4.12</ecNumber>
            <ecNumber>3.6.4.13</ecNumber>
        </recommendedName>
        <alternativeName>
            <fullName>nsp13</fullName>
        </alternativeName>
        <alternativeName>
            <fullName>p66</fullName>
        </alternativeName>
        <alternativeName>
            <fullName>p66-HEL</fullName>
        </alternativeName>
    </component>
    <component>
        <recommendedName>
            <fullName>Exoribonuclease</fullName>
            <shortName>ExoN</shortName>
            <ecNumber>3.1.13.-</ecNumber>
        </recommendedName>
        <alternativeName>
            <fullName>nsp14</fullName>
        </alternativeName>
    </component>
    <component>
        <recommendedName>
            <fullName>Uridylate-specific endoribonuclease</fullName>
            <ecNumber>4.6.1.-</ecNumber>
        </recommendedName>
        <alternativeName>
            <fullName>NendoU</fullName>
        </alternativeName>
        <alternativeName>
            <fullName>nsp15</fullName>
        </alternativeName>
        <alternativeName>
            <fullName>p41</fullName>
        </alternativeName>
    </component>
    <component>
        <recommendedName>
            <fullName>Putative 2'-O-methyl transferase</fullName>
            <ecNumber>2.1.1.57</ecNumber>
        </recommendedName>
        <alternativeName>
            <fullName>nsp16</fullName>
        </alternativeName>
    </component>
</protein>
<reference key="1">
    <citation type="journal article" date="1995" name="Virology">
        <title>Complete sequence (20 kilobases) of the polyprotein-encoding gene 1 of transmissible gastroenteritis virus.</title>
        <authorList>
            <person name="Eleouet J."/>
            <person name="Rasschaert D."/>
            <person name="Lambert P."/>
            <person name="Levy L."/>
            <person name="Vende P."/>
            <person name="Laude H."/>
        </authorList>
    </citation>
    <scope>NUCLEOTIDE SEQUENCE [MRNA] (ORF1A)</scope>
    <source>
        <strain>Isolate Purdue-115</strain>
    </source>
</reference>
<reference key="2">
    <citation type="journal article" date="2000" name="Proc. Natl. Acad. Sci. U.S.A.">
        <title>Engineering the largest RNA virus genome as an infectious bacterial artificial chromosome.</title>
        <authorList>
            <person name="Almazan F."/>
            <person name="Gonzalez J.M."/>
            <person name="Penzes Z."/>
            <person name="Izeta A."/>
            <person name="Calvo E."/>
            <person name="Plana-Duran J."/>
            <person name="Enjuanes L."/>
        </authorList>
    </citation>
    <scope>NUCLEOTIDE SEQUENCE [GENOMIC RNA]</scope>
    <source>
        <strain>Isolate PUR46-MAD</strain>
    </source>
</reference>
<reference key="3">
    <citation type="journal article" date="2002" name="J. Gen. Virol.">
        <title>Conservation of substrate specificities among coronavirus main proteases.</title>
        <authorList>
            <person name="Hegyi A."/>
            <person name="Ziebuhr J."/>
        </authorList>
    </citation>
    <scope>PROTEOLYTIC PROCESSING OF POLYPROTEIN</scope>
    <source>
        <strain>Isolate Purdue-115</strain>
    </source>
</reference>
<reference key="4">
    <citation type="journal article" date="2011" name="J. Virol.">
        <title>Alphacoronavirus transmissible gastroenteritis virus nsp1 protein suppresses protein translation in mammalian cells and in cell-free HeLa cell extracts but not in rabbit reticulocyte lysate.</title>
        <authorList>
            <person name="Huang C."/>
            <person name="Lokugamage K.G."/>
            <person name="Rozovics J.M."/>
            <person name="Narayanan K."/>
            <person name="Semler B.L."/>
            <person name="Makino S."/>
        </authorList>
    </citation>
    <scope>FUNCTION OF NSP1</scope>
</reference>
<reference key="5">
    <citation type="journal article" date="2002" name="EMBO J.">
        <title>Structure of coronavirus main proteinase reveals combination of a chymotrypsin fold with an extra alpha-helical domain.</title>
        <authorList>
            <person name="Anand K."/>
            <person name="Palm G.J."/>
            <person name="Mesters J.R."/>
            <person name="Siddell S.G."/>
            <person name="Ziebuhr J."/>
            <person name="Hilgenfeld R."/>
        </authorList>
    </citation>
    <scope>X-RAY CRYSTALLOGRAPHY (1.96 ANGSTROMS) OF 2879-3180</scope>
</reference>
<reference key="6">
    <citation type="journal article" date="2003" name="Science">
        <title>Coronavirus main proteinase (3CLpro) structure: basis for design of anti-SARS drugs.</title>
        <authorList>
            <person name="Anand K."/>
            <person name="Ziebuhr J."/>
            <person name="Wadhwani P."/>
            <person name="Mesters J.R."/>
            <person name="Hilgenfeld R."/>
        </authorList>
    </citation>
    <scope>X-RAY CRYSTALLOGRAPHY (2.37 ANGSTROMS) OF 2879-3180 COMPLEXED WITH THE SUBSTRATE-ANALOG HEXAPEPTIDYL CMK</scope>
</reference>
<gene>
    <name type="primary">rep</name>
    <name type="ORF">1a-1b</name>
</gene>
<dbReference type="EC" id="3.4.19.12"/>
<dbReference type="EC" id="3.4.22.-"/>
<dbReference type="EC" id="2.7.7.48"/>
<dbReference type="EC" id="2.7.7.50"/>
<dbReference type="EC" id="3.6.4.12"/>
<dbReference type="EC" id="3.6.4.13"/>
<dbReference type="EC" id="3.1.13.-"/>
<dbReference type="EC" id="4.6.1.-"/>
<dbReference type="EC" id="2.1.1.57"/>
<dbReference type="EMBL" id="Z34093">
    <property type="status" value="NOT_ANNOTATED_CDS"/>
    <property type="molecule type" value="mRNA"/>
</dbReference>
<dbReference type="EMBL" id="AJ271965">
    <property type="protein sequence ID" value="CAB91143.1"/>
    <property type="status" value="ALT_SEQ"/>
    <property type="molecule type" value="Genomic_RNA"/>
</dbReference>
<dbReference type="PDB" id="1LVO">
    <property type="method" value="X-ray"/>
    <property type="resolution" value="1.96 A"/>
    <property type="chains" value="A/B/C/D/E/F=2879-3180"/>
</dbReference>
<dbReference type="PDB" id="1P9U">
    <property type="method" value="X-ray"/>
    <property type="resolution" value="2.37 A"/>
    <property type="chains" value="A/B/C/D/E/F=2879-3180"/>
</dbReference>
<dbReference type="PDB" id="2AMP">
    <property type="method" value="X-ray"/>
    <property type="resolution" value="2.70 A"/>
    <property type="chains" value="A/B=2879-3180"/>
</dbReference>
<dbReference type="PDB" id="6IVC">
    <property type="method" value="X-ray"/>
    <property type="resolution" value="1.80 A"/>
    <property type="chains" value="A/B/E/F=1-109"/>
</dbReference>
<dbReference type="PDBsum" id="1LVO"/>
<dbReference type="PDBsum" id="1P9U"/>
<dbReference type="PDBsum" id="2AMP"/>
<dbReference type="PDBsum" id="6IVC"/>
<dbReference type="SMR" id="P0C6Y5"/>
<dbReference type="IntAct" id="P0C6Y5">
    <property type="interactions" value="7"/>
</dbReference>
<dbReference type="MEROPS" id="C30.004"/>
<dbReference type="EvolutionaryTrace" id="P0C6Y5"/>
<dbReference type="Proteomes" id="UP000001440">
    <property type="component" value="Segment"/>
</dbReference>
<dbReference type="GO" id="GO:0044172">
    <property type="term" value="C:host cell endoplasmic reticulum-Golgi intermediate compartment"/>
    <property type="evidence" value="ECO:0007669"/>
    <property type="project" value="UniProtKB-SubCell"/>
</dbReference>
<dbReference type="GO" id="GO:0033644">
    <property type="term" value="C:host cell membrane"/>
    <property type="evidence" value="ECO:0007669"/>
    <property type="project" value="UniProtKB-SubCell"/>
</dbReference>
<dbReference type="GO" id="GO:0044220">
    <property type="term" value="C:host cell perinuclear region of cytoplasm"/>
    <property type="evidence" value="ECO:0007669"/>
    <property type="project" value="UniProtKB-SubCell"/>
</dbReference>
<dbReference type="GO" id="GO:0016020">
    <property type="term" value="C:membrane"/>
    <property type="evidence" value="ECO:0007669"/>
    <property type="project" value="UniProtKB-KW"/>
</dbReference>
<dbReference type="GO" id="GO:0000175">
    <property type="term" value="F:3'-5'-RNA exonuclease activity"/>
    <property type="evidence" value="ECO:0007669"/>
    <property type="project" value="InterPro"/>
</dbReference>
<dbReference type="GO" id="GO:0043139">
    <property type="term" value="F:5'-3' DNA helicase activity"/>
    <property type="evidence" value="ECO:0007669"/>
    <property type="project" value="TreeGrafter"/>
</dbReference>
<dbReference type="GO" id="GO:0005524">
    <property type="term" value="F:ATP binding"/>
    <property type="evidence" value="ECO:0007669"/>
    <property type="project" value="UniProtKB-KW"/>
</dbReference>
<dbReference type="GO" id="GO:0016887">
    <property type="term" value="F:ATP hydrolysis activity"/>
    <property type="evidence" value="ECO:0007669"/>
    <property type="project" value="RHEA"/>
</dbReference>
<dbReference type="GO" id="GO:0004843">
    <property type="term" value="F:cysteine-type deubiquitinase activity"/>
    <property type="evidence" value="ECO:0007669"/>
    <property type="project" value="UniProtKB-EC"/>
</dbReference>
<dbReference type="GO" id="GO:0004197">
    <property type="term" value="F:cysteine-type endopeptidase activity"/>
    <property type="evidence" value="ECO:0007669"/>
    <property type="project" value="InterPro"/>
</dbReference>
<dbReference type="GO" id="GO:0004519">
    <property type="term" value="F:endonuclease activity"/>
    <property type="evidence" value="ECO:0007669"/>
    <property type="project" value="UniProtKB-KW"/>
</dbReference>
<dbReference type="GO" id="GO:0016829">
    <property type="term" value="F:lyase activity"/>
    <property type="evidence" value="ECO:0007669"/>
    <property type="project" value="UniProtKB-KW"/>
</dbReference>
<dbReference type="GO" id="GO:0004483">
    <property type="term" value="F:mRNA (nucleoside-2'-O-)-methyltransferase activity"/>
    <property type="evidence" value="ECO:0007669"/>
    <property type="project" value="InterPro"/>
</dbReference>
<dbReference type="GO" id="GO:0004482">
    <property type="term" value="F:mRNA 5'-cap (guanine-N7-)-methyltransferase activity"/>
    <property type="evidence" value="ECO:0007669"/>
    <property type="project" value="InterPro"/>
</dbReference>
<dbReference type="GO" id="GO:0008242">
    <property type="term" value="F:omega peptidase activity"/>
    <property type="evidence" value="ECO:0007669"/>
    <property type="project" value="InterPro"/>
</dbReference>
<dbReference type="GO" id="GO:0003723">
    <property type="term" value="F:RNA binding"/>
    <property type="evidence" value="ECO:0007669"/>
    <property type="project" value="UniProtKB-KW"/>
</dbReference>
<dbReference type="GO" id="GO:0003724">
    <property type="term" value="F:RNA helicase activity"/>
    <property type="evidence" value="ECO:0007669"/>
    <property type="project" value="UniProtKB-EC"/>
</dbReference>
<dbReference type="GO" id="GO:0003968">
    <property type="term" value="F:RNA-directed RNA polymerase activity"/>
    <property type="evidence" value="ECO:0007669"/>
    <property type="project" value="UniProtKB-KW"/>
</dbReference>
<dbReference type="GO" id="GO:0008270">
    <property type="term" value="F:zinc ion binding"/>
    <property type="evidence" value="ECO:0007669"/>
    <property type="project" value="UniProtKB-KW"/>
</dbReference>
<dbReference type="GO" id="GO:0006351">
    <property type="term" value="P:DNA-templated transcription"/>
    <property type="evidence" value="ECO:0007669"/>
    <property type="project" value="InterPro"/>
</dbReference>
<dbReference type="GO" id="GO:0006508">
    <property type="term" value="P:proteolysis"/>
    <property type="evidence" value="ECO:0007669"/>
    <property type="project" value="UniProtKB-KW"/>
</dbReference>
<dbReference type="GO" id="GO:0010506">
    <property type="term" value="P:regulation of autophagy"/>
    <property type="evidence" value="ECO:0007669"/>
    <property type="project" value="InterPro"/>
</dbReference>
<dbReference type="GO" id="GO:0039520">
    <property type="term" value="P:symbiont-mediated activation of host autophagy"/>
    <property type="evidence" value="ECO:0007669"/>
    <property type="project" value="UniProtKB-KW"/>
</dbReference>
<dbReference type="GO" id="GO:0039648">
    <property type="term" value="P:symbiont-mediated perturbation of host ubiquitin-like protein modification"/>
    <property type="evidence" value="ECO:0007669"/>
    <property type="project" value="UniProtKB-KW"/>
</dbReference>
<dbReference type="GO" id="GO:0039548">
    <property type="term" value="P:symbiont-mediated suppression of host cytoplasmic pattern recognition receptor signaling pathway via inhibition of IRF3 activity"/>
    <property type="evidence" value="ECO:0007669"/>
    <property type="project" value="UniProtKB-KW"/>
</dbReference>
<dbReference type="GO" id="GO:0019079">
    <property type="term" value="P:viral genome replication"/>
    <property type="evidence" value="ECO:0007669"/>
    <property type="project" value="InterPro"/>
</dbReference>
<dbReference type="GO" id="GO:0019082">
    <property type="term" value="P:viral protein processing"/>
    <property type="evidence" value="ECO:0007669"/>
    <property type="project" value="InterPro"/>
</dbReference>
<dbReference type="GO" id="GO:0075523">
    <property type="term" value="P:viral translational frameshifting"/>
    <property type="evidence" value="ECO:0007669"/>
    <property type="project" value="UniProtKB-KW"/>
</dbReference>
<dbReference type="CDD" id="cd21409">
    <property type="entry name" value="1B_cv_Nsp13-like"/>
    <property type="match status" value="1"/>
</dbReference>
<dbReference type="CDD" id="cd21901">
    <property type="entry name" value="alpha_betaCoV_Nsp10"/>
    <property type="match status" value="1"/>
</dbReference>
<dbReference type="CDD" id="cd21558">
    <property type="entry name" value="alphaCoV-Nsp6"/>
    <property type="match status" value="1"/>
</dbReference>
<dbReference type="CDD" id="cd21723">
    <property type="entry name" value="alphaCoV_Nsp13-helicase"/>
    <property type="match status" value="1"/>
</dbReference>
<dbReference type="CDD" id="cd21660">
    <property type="entry name" value="alphaCoV_Nsp14"/>
    <property type="match status" value="1"/>
</dbReference>
<dbReference type="CDD" id="cd21514">
    <property type="entry name" value="alphaCoV_Nsp2_HCoV-229E-like"/>
    <property type="match status" value="1"/>
</dbReference>
<dbReference type="CDD" id="cd21665">
    <property type="entry name" value="alphaCoV_Nsp5_Mpro"/>
    <property type="match status" value="1"/>
</dbReference>
<dbReference type="CDD" id="cd21826">
    <property type="entry name" value="alphaCoV_Nsp7"/>
    <property type="match status" value="1"/>
</dbReference>
<dbReference type="CDD" id="cd21830">
    <property type="entry name" value="alphaCoV_Nsp8"/>
    <property type="match status" value="1"/>
</dbReference>
<dbReference type="CDD" id="cd21897">
    <property type="entry name" value="alphaCoV_Nsp9"/>
    <property type="match status" value="1"/>
</dbReference>
<dbReference type="CDD" id="cd21731">
    <property type="entry name" value="alphaCoV_PLPro"/>
    <property type="match status" value="1"/>
</dbReference>
<dbReference type="CDD" id="cd21588">
    <property type="entry name" value="alphaCoV_RdRp"/>
    <property type="match status" value="1"/>
</dbReference>
<dbReference type="CDD" id="cd23527">
    <property type="entry name" value="capping_2-OMTase_alphaCoV_Nsp16"/>
    <property type="match status" value="1"/>
</dbReference>
<dbReference type="CDD" id="cd21473">
    <property type="entry name" value="cv_Nsp4_TM"/>
    <property type="match status" value="1"/>
</dbReference>
<dbReference type="CDD" id="cd21167">
    <property type="entry name" value="M_alpha_beta_cv_Nsp15-like"/>
    <property type="match status" value="1"/>
</dbReference>
<dbReference type="CDD" id="cd21557">
    <property type="entry name" value="Macro_X_Nsp3-like"/>
    <property type="match status" value="1"/>
</dbReference>
<dbReference type="CDD" id="cd21161">
    <property type="entry name" value="NendoU_cv_Nsp15-like"/>
    <property type="match status" value="1"/>
</dbReference>
<dbReference type="CDD" id="cd21171">
    <property type="entry name" value="NTD_alpha_betaCoV_Nsp15-like"/>
    <property type="match status" value="1"/>
</dbReference>
<dbReference type="CDD" id="cd21689">
    <property type="entry name" value="stalk_CoV_Nsp13-like"/>
    <property type="match status" value="1"/>
</dbReference>
<dbReference type="CDD" id="cd21687">
    <property type="entry name" value="TGEV-like_alphaCoV_Nsp1"/>
    <property type="match status" value="1"/>
</dbReference>
<dbReference type="CDD" id="cd21712">
    <property type="entry name" value="TM_Y_alphaCoV_Nsp3_C"/>
    <property type="match status" value="1"/>
</dbReference>
<dbReference type="CDD" id="cd21401">
    <property type="entry name" value="ZBD_cv_Nsp13-like"/>
    <property type="match status" value="1"/>
</dbReference>
<dbReference type="Gene3D" id="1.10.8.1190">
    <property type="match status" value="2"/>
</dbReference>
<dbReference type="Gene3D" id="3.10.20.540">
    <property type="match status" value="1"/>
</dbReference>
<dbReference type="Gene3D" id="3.40.50.11580">
    <property type="match status" value="1"/>
</dbReference>
<dbReference type="Gene3D" id="6.10.140.2090">
    <property type="match status" value="1"/>
</dbReference>
<dbReference type="Gene3D" id="1.10.150.420">
    <property type="entry name" value="Coronavirus nonstructural protein 4 C-terminus"/>
    <property type="match status" value="1"/>
</dbReference>
<dbReference type="Gene3D" id="3.40.220.10">
    <property type="entry name" value="Leucine Aminopeptidase, subunit E, domain 1"/>
    <property type="match status" value="1"/>
</dbReference>
<dbReference type="Gene3D" id="1.10.1840.10">
    <property type="entry name" value="main proteinase (3clpro) structure, domain 3"/>
    <property type="match status" value="1"/>
</dbReference>
<dbReference type="Gene3D" id="3.30.160.820">
    <property type="entry name" value="Nsp15 N-terminal domain-like"/>
    <property type="match status" value="1"/>
</dbReference>
<dbReference type="Gene3D" id="1.10.8.370">
    <property type="entry name" value="nsp7 replicase"/>
    <property type="match status" value="1"/>
</dbReference>
<dbReference type="Gene3D" id="3.30.70.3540">
    <property type="entry name" value="Nsp8 replicase, head domain"/>
    <property type="match status" value="1"/>
</dbReference>
<dbReference type="Gene3D" id="3.40.50.300">
    <property type="entry name" value="P-loop containing nucleotide triphosphate hydrolases"/>
    <property type="match status" value="2"/>
</dbReference>
<dbReference type="Gene3D" id="2.40.10.250">
    <property type="entry name" value="Replicase NSP9"/>
    <property type="match status" value="1"/>
</dbReference>
<dbReference type="Gene3D" id="2.30.30.1000">
    <property type="entry name" value="Replicase polyprotein 1a"/>
    <property type="match status" value="1"/>
</dbReference>
<dbReference type="Gene3D" id="2.40.10.10">
    <property type="entry name" value="Trypsin-like serine proteases"/>
    <property type="match status" value="2"/>
</dbReference>
<dbReference type="Gene3D" id="3.40.50.150">
    <property type="entry name" value="Vaccinia Virus protein VP39"/>
    <property type="match status" value="1"/>
</dbReference>
<dbReference type="InterPro" id="IPR027351">
    <property type="entry name" value="(+)RNA_virus_helicase_core_dom"/>
</dbReference>
<dbReference type="InterPro" id="IPR032039">
    <property type="entry name" value="A-CoV_nsp1"/>
</dbReference>
<dbReference type="InterPro" id="IPR038634">
    <property type="entry name" value="A-CoV_nsp1_sf"/>
</dbReference>
<dbReference type="InterPro" id="IPR046443">
    <property type="entry name" value="a/bCoV_NSP1_glob"/>
</dbReference>
<dbReference type="InterPro" id="IPR046440">
    <property type="entry name" value="AV_NSP11N_COV_NSP15M"/>
</dbReference>
<dbReference type="InterPro" id="IPR050534">
    <property type="entry name" value="Coronavir_polyprotein_1ab"/>
</dbReference>
<dbReference type="InterPro" id="IPR043608">
    <property type="entry name" value="CoV_NSP15_M"/>
</dbReference>
<dbReference type="InterPro" id="IPR043606">
    <property type="entry name" value="CoV_NSP15_N"/>
</dbReference>
<dbReference type="InterPro" id="IPR043613">
    <property type="entry name" value="CoV_NSP2_C"/>
</dbReference>
<dbReference type="InterPro" id="IPR047573">
    <property type="entry name" value="CoV_NSP2_M"/>
</dbReference>
<dbReference type="InterPro" id="IPR049894">
    <property type="entry name" value="COV_NSP3_3ECTO"/>
</dbReference>
<dbReference type="InterPro" id="IPR043611">
    <property type="entry name" value="CoV_NSP3_C"/>
</dbReference>
<dbReference type="InterPro" id="IPR047566">
    <property type="entry name" value="CoV_NSP3_Y"/>
</dbReference>
<dbReference type="InterPro" id="IPR032505">
    <property type="entry name" value="CoV_NSP4_C"/>
</dbReference>
<dbReference type="InterPro" id="IPR043612">
    <property type="entry name" value="CoV_NSP4_N"/>
</dbReference>
<dbReference type="InterPro" id="IPR043502">
    <property type="entry name" value="DNA/RNA_pol_sf"/>
</dbReference>
<dbReference type="InterPro" id="IPR041679">
    <property type="entry name" value="DNA2/NAM7-like_C"/>
</dbReference>
<dbReference type="InterPro" id="IPR037227">
    <property type="entry name" value="EndoU-like"/>
</dbReference>
<dbReference type="InterPro" id="IPR002589">
    <property type="entry name" value="Macro_dom"/>
</dbReference>
<dbReference type="InterPro" id="IPR043472">
    <property type="entry name" value="Macro_dom-like"/>
</dbReference>
<dbReference type="InterPro" id="IPR044371">
    <property type="entry name" value="Macro_X_NSP3-like"/>
</dbReference>
<dbReference type="InterPro" id="IPR046435">
    <property type="entry name" value="N7_MTase_CoV"/>
</dbReference>
<dbReference type="InterPro" id="IPR043609">
    <property type="entry name" value="NendoU_nidovirus"/>
</dbReference>
<dbReference type="InterPro" id="IPR044863">
    <property type="entry name" value="NIRAN"/>
</dbReference>
<dbReference type="InterPro" id="IPR046438">
    <property type="entry name" value="NIV_2_O_MTASE"/>
</dbReference>
<dbReference type="InterPro" id="IPR046436">
    <property type="entry name" value="NIV_EXON"/>
</dbReference>
<dbReference type="InterPro" id="IPR036333">
    <property type="entry name" value="NSP10_sf_CoV"/>
</dbReference>
<dbReference type="InterPro" id="IPR047570">
    <property type="entry name" value="NSP12_IF_CoV"/>
</dbReference>
<dbReference type="InterPro" id="IPR044343">
    <property type="entry name" value="NSP13_1B_dom_CoV"/>
</dbReference>
<dbReference type="InterPro" id="IPR047912">
    <property type="entry name" value="Nsp13_helicase_alphaCoV"/>
</dbReference>
<dbReference type="InterPro" id="IPR048673">
    <property type="entry name" value="NSP13_stalk_CoV"/>
</dbReference>
<dbReference type="InterPro" id="IPR048672">
    <property type="entry name" value="NSP13_ZBD_CoV"/>
</dbReference>
<dbReference type="InterPro" id="IPR027352">
    <property type="entry name" value="NSP13_ZBD_CoV-like"/>
</dbReference>
<dbReference type="InterPro" id="IPR044313">
    <property type="entry name" value="NSP14_alphaCoV"/>
</dbReference>
<dbReference type="InterPro" id="IPR009466">
    <property type="entry name" value="NSP14_CoV"/>
</dbReference>
<dbReference type="InterPro" id="IPR044330">
    <property type="entry name" value="NSP15_alpha_betaCoV_N"/>
</dbReference>
<dbReference type="InterPro" id="IPR044322">
    <property type="entry name" value="NSP15_M_alpha_beta_CoV"/>
</dbReference>
<dbReference type="InterPro" id="IPR043174">
    <property type="entry name" value="NSP15_middle_sf"/>
</dbReference>
<dbReference type="InterPro" id="IPR042515">
    <property type="entry name" value="NSP15_N_CoV"/>
</dbReference>
<dbReference type="InterPro" id="IPR044401">
    <property type="entry name" value="NSP15_NendoU_CoV"/>
</dbReference>
<dbReference type="InterPro" id="IPR009461">
    <property type="entry name" value="NSP16_CoV-like"/>
</dbReference>
<dbReference type="InterPro" id="IPR044385">
    <property type="entry name" value="NSP2_HCoV-229E-like"/>
</dbReference>
<dbReference type="InterPro" id="IPR043615">
    <property type="entry name" value="NSP2_N_CoV"/>
</dbReference>
<dbReference type="InterPro" id="IPR044357">
    <property type="entry name" value="NSP3_Ubl1_dom_CoV"/>
</dbReference>
<dbReference type="InterPro" id="IPR044353">
    <property type="entry name" value="Nsp3_Ubl2_dom_CoV"/>
</dbReference>
<dbReference type="InterPro" id="IPR038123">
    <property type="entry name" value="NSP4_C_sf_CoV"/>
</dbReference>
<dbReference type="InterPro" id="IPR044309">
    <property type="entry name" value="NSP5_Mpro_alphaCoV"/>
</dbReference>
<dbReference type="InterPro" id="IPR044369">
    <property type="entry name" value="NSP6_alphaCoV"/>
</dbReference>
<dbReference type="InterPro" id="IPR043610">
    <property type="entry name" value="NSP6_CoV"/>
</dbReference>
<dbReference type="InterPro" id="IPR014828">
    <property type="entry name" value="NSP7_CoV"/>
</dbReference>
<dbReference type="InterPro" id="IPR037204">
    <property type="entry name" value="NSP7_sf_CoV"/>
</dbReference>
<dbReference type="InterPro" id="IPR014829">
    <property type="entry name" value="NSP8_CoV"/>
</dbReference>
<dbReference type="InterPro" id="IPR037230">
    <property type="entry name" value="NSP8_sf_CoV"/>
</dbReference>
<dbReference type="InterPro" id="IPR014822">
    <property type="entry name" value="NSP9_CoV"/>
</dbReference>
<dbReference type="InterPro" id="IPR036499">
    <property type="entry name" value="NSP9_sf_CoV"/>
</dbReference>
<dbReference type="InterPro" id="IPR027417">
    <property type="entry name" value="P-loop_NTPase"/>
</dbReference>
<dbReference type="InterPro" id="IPR013016">
    <property type="entry name" value="Peptidase_C16_CoV"/>
</dbReference>
<dbReference type="InterPro" id="IPR008740">
    <property type="entry name" value="Peptidase_C30_CoV"/>
</dbReference>
<dbReference type="InterPro" id="IPR043477">
    <property type="entry name" value="Peptidase_C30_dom3_CoV"/>
</dbReference>
<dbReference type="InterPro" id="IPR009003">
    <property type="entry name" value="Peptidase_S1_PA"/>
</dbReference>
<dbReference type="InterPro" id="IPR043504">
    <property type="entry name" value="Peptidase_S1_PA_chymotrypsin"/>
</dbReference>
<dbReference type="InterPro" id="IPR043177">
    <property type="entry name" value="PLpro_N_sf_CoV"/>
</dbReference>
<dbReference type="InterPro" id="IPR043178">
    <property type="entry name" value="PLpro_thumb_sf_CoV"/>
</dbReference>
<dbReference type="InterPro" id="IPR044356">
    <property type="entry name" value="RdRp_alphaCoV"/>
</dbReference>
<dbReference type="InterPro" id="IPR046441">
    <property type="entry name" value="RdRp_CoV"/>
</dbReference>
<dbReference type="InterPro" id="IPR009469">
    <property type="entry name" value="RdRp_N_CoV"/>
</dbReference>
<dbReference type="InterPro" id="IPR001205">
    <property type="entry name" value="RNA-dir_pol_C"/>
</dbReference>
<dbReference type="InterPro" id="IPR018995">
    <property type="entry name" value="RNA_synth_NSP10_CoV"/>
</dbReference>
<dbReference type="InterPro" id="IPR029063">
    <property type="entry name" value="SAM-dependent_MTases_sf"/>
</dbReference>
<dbReference type="PANTHER" id="PTHR43788">
    <property type="entry name" value="DNA2/NAM7 HELICASE FAMILY MEMBER"/>
    <property type="match status" value="1"/>
</dbReference>
<dbReference type="PANTHER" id="PTHR43788:SF16">
    <property type="entry name" value="HELICASE WITH ZINC FINGER 2"/>
    <property type="match status" value="1"/>
</dbReference>
<dbReference type="Pfam" id="PF13087">
    <property type="entry name" value="AAA_12"/>
    <property type="match status" value="1"/>
</dbReference>
<dbReference type="Pfam" id="PF13604">
    <property type="entry name" value="AAA_30"/>
    <property type="match status" value="1"/>
</dbReference>
<dbReference type="Pfam" id="PF16688">
    <property type="entry name" value="CNV-Replicase_N"/>
    <property type="match status" value="1"/>
</dbReference>
<dbReference type="Pfam" id="PF06471">
    <property type="entry name" value="CoV_ExoN"/>
    <property type="match status" value="1"/>
</dbReference>
<dbReference type="Pfam" id="PF06460">
    <property type="entry name" value="CoV_Methyltr_2"/>
    <property type="match status" value="1"/>
</dbReference>
<dbReference type="Pfam" id="PF09401">
    <property type="entry name" value="CoV_NSP10"/>
    <property type="match status" value="1"/>
</dbReference>
<dbReference type="Pfam" id="PF20631">
    <property type="entry name" value="CoV_NSP13_1B"/>
    <property type="match status" value="1"/>
</dbReference>
<dbReference type="Pfam" id="PF20633">
    <property type="entry name" value="CoV_NSP13_stalk"/>
    <property type="match status" value="1"/>
</dbReference>
<dbReference type="Pfam" id="PF20632">
    <property type="entry name" value="CoV_NSP13_ZBD"/>
    <property type="match status" value="1"/>
</dbReference>
<dbReference type="Pfam" id="PF19215">
    <property type="entry name" value="CoV_NSP15_C"/>
    <property type="match status" value="1"/>
</dbReference>
<dbReference type="Pfam" id="PF19216">
    <property type="entry name" value="CoV_NSP15_M"/>
    <property type="match status" value="1"/>
</dbReference>
<dbReference type="Pfam" id="PF19219">
    <property type="entry name" value="CoV_NSP15_N"/>
    <property type="match status" value="1"/>
</dbReference>
<dbReference type="Pfam" id="PF19212">
    <property type="entry name" value="CoV_NSP2_C"/>
    <property type="match status" value="2"/>
</dbReference>
<dbReference type="Pfam" id="PF19211">
    <property type="entry name" value="CoV_NSP2_N"/>
    <property type="match status" value="1"/>
</dbReference>
<dbReference type="Pfam" id="PF19218">
    <property type="entry name" value="CoV_NSP3_C"/>
    <property type="match status" value="1"/>
</dbReference>
<dbReference type="Pfam" id="PF16348">
    <property type="entry name" value="CoV_NSP4_C"/>
    <property type="match status" value="1"/>
</dbReference>
<dbReference type="Pfam" id="PF19217">
    <property type="entry name" value="CoV_NSP4_N"/>
    <property type="match status" value="1"/>
</dbReference>
<dbReference type="Pfam" id="PF19213">
    <property type="entry name" value="CoV_NSP6"/>
    <property type="match status" value="1"/>
</dbReference>
<dbReference type="Pfam" id="PF08716">
    <property type="entry name" value="CoV_NSP7"/>
    <property type="match status" value="1"/>
</dbReference>
<dbReference type="Pfam" id="PF08717">
    <property type="entry name" value="CoV_NSP8"/>
    <property type="match status" value="1"/>
</dbReference>
<dbReference type="Pfam" id="PF08710">
    <property type="entry name" value="CoV_NSP9"/>
    <property type="match status" value="1"/>
</dbReference>
<dbReference type="Pfam" id="PF08715">
    <property type="entry name" value="CoV_peptidase"/>
    <property type="match status" value="2"/>
</dbReference>
<dbReference type="Pfam" id="PF06478">
    <property type="entry name" value="CoV_RPol_N"/>
    <property type="match status" value="1"/>
</dbReference>
<dbReference type="Pfam" id="PF01661">
    <property type="entry name" value="Macro"/>
    <property type="match status" value="1"/>
</dbReference>
<dbReference type="Pfam" id="PF05409">
    <property type="entry name" value="Peptidase_C30"/>
    <property type="match status" value="1"/>
</dbReference>
<dbReference type="Pfam" id="PF00680">
    <property type="entry name" value="RdRP_1"/>
    <property type="match status" value="1"/>
</dbReference>
<dbReference type="SMART" id="SM00506">
    <property type="entry name" value="A1pp"/>
    <property type="match status" value="1"/>
</dbReference>
<dbReference type="SUPFAM" id="SSF144246">
    <property type="entry name" value="Coronavirus NSP10-like"/>
    <property type="match status" value="2"/>
</dbReference>
<dbReference type="SUPFAM" id="SSF140367">
    <property type="entry name" value="Coronavirus NSP7-like"/>
    <property type="match status" value="1"/>
</dbReference>
<dbReference type="SUPFAM" id="SSF143076">
    <property type="entry name" value="Coronavirus NSP8-like"/>
    <property type="match status" value="1"/>
</dbReference>
<dbReference type="SUPFAM" id="SSF56672">
    <property type="entry name" value="DNA/RNA polymerases"/>
    <property type="match status" value="1"/>
</dbReference>
<dbReference type="SUPFAM" id="SSF142877">
    <property type="entry name" value="EndoU-like"/>
    <property type="match status" value="1"/>
</dbReference>
<dbReference type="SUPFAM" id="SSF52949">
    <property type="entry name" value="Macro domain-like"/>
    <property type="match status" value="1"/>
</dbReference>
<dbReference type="SUPFAM" id="SSF52540">
    <property type="entry name" value="P-loop containing nucleoside triphosphate hydrolases"/>
    <property type="match status" value="1"/>
</dbReference>
<dbReference type="SUPFAM" id="SSF101816">
    <property type="entry name" value="Replicase NSP9"/>
    <property type="match status" value="1"/>
</dbReference>
<dbReference type="SUPFAM" id="SSF53335">
    <property type="entry name" value="S-adenosyl-L-methionine-dependent methyltransferases"/>
    <property type="match status" value="1"/>
</dbReference>
<dbReference type="SUPFAM" id="SSF50494">
    <property type="entry name" value="Trypsin-like serine proteases"/>
    <property type="match status" value="1"/>
</dbReference>
<dbReference type="PROSITE" id="PS51961">
    <property type="entry name" value="AV_NSP11N_COV_NSP15M"/>
    <property type="match status" value="1"/>
</dbReference>
<dbReference type="PROSITE" id="PS51993">
    <property type="entry name" value="COV_3ECTO"/>
    <property type="match status" value="1"/>
</dbReference>
<dbReference type="PROSITE" id="PS51952">
    <property type="entry name" value="COV_EXON_MTASE_COACT"/>
    <property type="match status" value="1"/>
</dbReference>
<dbReference type="PROSITE" id="PS51954">
    <property type="entry name" value="COV_N7_MTASE"/>
    <property type="match status" value="1"/>
</dbReference>
<dbReference type="PROSITE" id="PS51962">
    <property type="entry name" value="COV_NSP1"/>
    <property type="match status" value="1"/>
</dbReference>
<dbReference type="PROSITE" id="PS52000">
    <property type="entry name" value="COV_NSP12_IF"/>
    <property type="match status" value="1"/>
</dbReference>
<dbReference type="PROSITE" id="PS51948">
    <property type="entry name" value="COV_NSP12_RDRP"/>
    <property type="match status" value="1"/>
</dbReference>
<dbReference type="PROSITE" id="PS51960">
    <property type="entry name" value="COV_NSP15_NTD"/>
    <property type="match status" value="1"/>
</dbReference>
<dbReference type="PROSITE" id="PS51991">
    <property type="entry name" value="COV_NSP2_C"/>
    <property type="match status" value="1"/>
</dbReference>
<dbReference type="PROSITE" id="PS51990">
    <property type="entry name" value="COV_NSP2_M"/>
    <property type="match status" value="1"/>
</dbReference>
<dbReference type="PROSITE" id="PS51989">
    <property type="entry name" value="COV_NSP2_N"/>
    <property type="match status" value="1"/>
</dbReference>
<dbReference type="PROSITE" id="PS51992">
    <property type="entry name" value="COV_NSP3_Y"/>
    <property type="match status" value="1"/>
</dbReference>
<dbReference type="PROSITE" id="PS51943">
    <property type="entry name" value="COV_NSP3A_UBL"/>
    <property type="match status" value="1"/>
</dbReference>
<dbReference type="PROSITE" id="PS51944">
    <property type="entry name" value="COV_NSP3D_UBL"/>
    <property type="match status" value="1"/>
</dbReference>
<dbReference type="PROSITE" id="PS51946">
    <property type="entry name" value="COV_NSP4C"/>
    <property type="match status" value="1"/>
</dbReference>
<dbReference type="PROSITE" id="PS51949">
    <property type="entry name" value="COV_NSP7"/>
    <property type="match status" value="1"/>
</dbReference>
<dbReference type="PROSITE" id="PS51950">
    <property type="entry name" value="COV_NSP8"/>
    <property type="match status" value="1"/>
</dbReference>
<dbReference type="PROSITE" id="PS51951">
    <property type="entry name" value="COV_NSP9_SSRNA_BD"/>
    <property type="match status" value="1"/>
</dbReference>
<dbReference type="PROSITE" id="PS51653">
    <property type="entry name" value="CV_ZBD"/>
    <property type="match status" value="1"/>
</dbReference>
<dbReference type="PROSITE" id="PS51442">
    <property type="entry name" value="M_PRO"/>
    <property type="match status" value="1"/>
</dbReference>
<dbReference type="PROSITE" id="PS51154">
    <property type="entry name" value="MACRO"/>
    <property type="match status" value="1"/>
</dbReference>
<dbReference type="PROSITE" id="PS51958">
    <property type="entry name" value="NENDOU"/>
    <property type="match status" value="1"/>
</dbReference>
<dbReference type="PROSITE" id="PS51947">
    <property type="entry name" value="NIRAN"/>
    <property type="match status" value="1"/>
</dbReference>
<dbReference type="PROSITE" id="PS51955">
    <property type="entry name" value="NIV_2_O_MTASE"/>
    <property type="match status" value="1"/>
</dbReference>
<dbReference type="PROSITE" id="PS51953">
    <property type="entry name" value="NIV_EXON"/>
    <property type="match status" value="1"/>
</dbReference>
<dbReference type="PROSITE" id="PS51124">
    <property type="entry name" value="PEPTIDASE_C16"/>
    <property type="match status" value="2"/>
</dbReference>
<dbReference type="PROSITE" id="PS51657">
    <property type="entry name" value="PSRV_HELICASE"/>
    <property type="match status" value="1"/>
</dbReference>
<proteinExistence type="evidence at protein level"/>
<organismHost>
    <name type="scientific">Sus scrofa</name>
    <name type="common">Pig</name>
    <dbReference type="NCBI Taxonomy" id="9823"/>
</organismHost>
<feature type="chain" id="PRO_0000037386" description="Non-structural protein 1" evidence="1">
    <location>
        <begin position="1"/>
        <end position="110"/>
    </location>
</feature>
<feature type="chain" id="PRO_0000037387" description="Non-structural protein 2" evidence="1">
    <location>
        <begin position="111"/>
        <end position="879"/>
    </location>
</feature>
<feature type="chain" id="PRO_0000037388" description="Non-structural protein 3" evidence="1">
    <location>
        <begin position="880"/>
        <end position="2388"/>
    </location>
</feature>
<feature type="chain" id="PRO_0000037389" description="Non-structural protein 4" evidence="1">
    <location>
        <begin position="2389"/>
        <end position="2878"/>
    </location>
</feature>
<feature type="chain" id="PRO_0000037390" description="3C-like proteinase">
    <location>
        <begin position="2879"/>
        <end position="3180"/>
    </location>
</feature>
<feature type="chain" id="PRO_0000037391" description="Non-structural protein 6" evidence="1">
    <location>
        <begin position="3181"/>
        <end position="3474"/>
    </location>
</feature>
<feature type="chain" id="PRO_0000037392" description="Non-structural protein 7" evidence="1">
    <location>
        <begin position="3475"/>
        <end position="3557"/>
    </location>
</feature>
<feature type="chain" id="PRO_0000037393" description="Non-structural protein 8" evidence="1">
    <location>
        <begin position="3558"/>
        <end position="3752"/>
    </location>
</feature>
<feature type="chain" id="PRO_0000037394" description="Viral protein genome-linked nsp9">
    <location>
        <begin position="3753"/>
        <end position="3863"/>
    </location>
</feature>
<feature type="chain" id="PRO_0000037395" description="Non-structural protein 10" evidence="1">
    <location>
        <begin position="3864"/>
        <end position="3998"/>
    </location>
</feature>
<feature type="chain" id="PRO_0000037396" description="RNA-directed RNA polymerase nsp12" evidence="1">
    <location>
        <begin position="3999"/>
        <end position="4927"/>
    </location>
</feature>
<feature type="chain" id="PRO_0000037397" description="Helicase" evidence="1">
    <location>
        <begin position="4928"/>
        <end position="5526"/>
    </location>
</feature>
<feature type="chain" id="PRO_0000037398" description="Exoribonuclease" evidence="1">
    <location>
        <begin position="5527"/>
        <end position="6045"/>
    </location>
</feature>
<feature type="chain" id="PRO_0000037399" description="Uridylate-specific endoribonuclease" evidence="1">
    <location>
        <begin position="6046"/>
        <end position="6384"/>
    </location>
</feature>
<feature type="chain" id="PRO_0000037400" description="Putative 2'-O-methyl transferase" evidence="1">
    <location>
        <begin position="6385"/>
        <end position="6684"/>
    </location>
</feature>
<feature type="transmembrane region" description="Helical" evidence="4">
    <location>
        <begin position="1896"/>
        <end position="1916"/>
    </location>
</feature>
<feature type="transmembrane region" description="Helical" evidence="4">
    <location>
        <begin position="1995"/>
        <end position="2015"/>
    </location>
</feature>
<feature type="transmembrane region" description="Helical" evidence="4">
    <location>
        <begin position="2033"/>
        <end position="2053"/>
    </location>
</feature>
<feature type="transmembrane region" description="Helical" evidence="4">
    <location>
        <begin position="2401"/>
        <end position="2421"/>
    </location>
</feature>
<feature type="transmembrane region" description="Helical" evidence="4">
    <location>
        <begin position="2467"/>
        <end position="2487"/>
    </location>
</feature>
<feature type="transmembrane region" description="Helical" evidence="4">
    <location>
        <begin position="2497"/>
        <end position="2517"/>
    </location>
</feature>
<feature type="transmembrane region" description="Helical" evidence="4">
    <location>
        <begin position="2538"/>
        <end position="2558"/>
    </location>
</feature>
<feature type="transmembrane region" description="Helical" evidence="4">
    <location>
        <begin position="2666"/>
        <end position="2686"/>
    </location>
</feature>
<feature type="transmembrane region" description="Helical" evidence="4">
    <location>
        <begin position="2695"/>
        <end position="2715"/>
    </location>
</feature>
<feature type="transmembrane region" description="Helical" evidence="4">
    <location>
        <begin position="2721"/>
        <end position="2741"/>
    </location>
</feature>
<feature type="transmembrane region" description="Helical" evidence="4">
    <location>
        <begin position="2746"/>
        <end position="2766"/>
    </location>
</feature>
<feature type="transmembrane region" description="Helical" evidence="4">
    <location>
        <begin position="3187"/>
        <end position="3207"/>
    </location>
</feature>
<feature type="transmembrane region" description="Helical" evidence="4">
    <location>
        <begin position="3217"/>
        <end position="3237"/>
    </location>
</feature>
<feature type="transmembrane region" description="Helical" evidence="4">
    <location>
        <begin position="3242"/>
        <end position="3262"/>
    </location>
</feature>
<feature type="transmembrane region" description="Helical" evidence="4">
    <location>
        <begin position="3280"/>
        <end position="3300"/>
    </location>
</feature>
<feature type="transmembrane region" description="Helical" evidence="4">
    <location>
        <begin position="3313"/>
        <end position="3333"/>
    </location>
</feature>
<feature type="transmembrane region" description="Helical" evidence="4">
    <location>
        <begin position="3347"/>
        <end position="3367"/>
    </location>
</feature>
<feature type="transmembrane region" description="Helical" evidence="4">
    <location>
        <begin position="3371"/>
        <end position="3391"/>
    </location>
</feature>
<feature type="transmembrane region" description="Helical" evidence="4">
    <location>
        <begin position="3394"/>
        <end position="3414"/>
    </location>
</feature>
<feature type="domain" description="CoV Nsp1 globular" evidence="23">
    <location>
        <begin position="2"/>
        <end position="108"/>
    </location>
</feature>
<feature type="domain" description="CoV Nsp2 N-terminal" evidence="24">
    <location>
        <begin position="111"/>
        <end position="349"/>
    </location>
</feature>
<feature type="domain" description="CoV Nsp2 middle" evidence="25">
    <location>
        <begin position="378"/>
        <end position="773"/>
    </location>
</feature>
<feature type="domain" description="CoV Nsp2 C-terminal" evidence="26">
    <location>
        <begin position="768"/>
        <end position="879"/>
    </location>
</feature>
<feature type="domain" description="Ubiquitin-like 1" evidence="5">
    <location>
        <begin position="882"/>
        <end position="983"/>
    </location>
</feature>
<feature type="domain" description="Peptidase C16 1" evidence="6">
    <location>
        <begin position="1055"/>
        <end position="1299"/>
    </location>
</feature>
<feature type="domain" description="Macro" evidence="7">
    <location>
        <begin position="1318"/>
        <end position="1489"/>
    </location>
</feature>
<feature type="domain" description="Ubiquitin-like 2" evidence="5">
    <location>
        <begin position="1486"/>
        <end position="1542"/>
    </location>
</feature>
<feature type="domain" description="Peptidase C16 2" evidence="6">
    <location>
        <begin position="1550"/>
        <end position="1803"/>
    </location>
</feature>
<feature type="domain" description="3Ecto" evidence="28">
    <location>
        <begin position="1905"/>
        <end position="1970"/>
    </location>
</feature>
<feature type="domain" description="CoV Nsp3 Y" evidence="27">
    <location>
        <begin position="2044"/>
        <end position="2384"/>
    </location>
</feature>
<feature type="domain" description="Nsp4C" evidence="10">
    <location>
        <begin position="2783"/>
        <end position="2878"/>
    </location>
</feature>
<feature type="domain" description="Peptidase C30" evidence="8">
    <location>
        <begin position="2879"/>
        <end position="3180"/>
    </location>
</feature>
<feature type="domain" description="RdRp Nsp7 cofactor" evidence="13">
    <location>
        <begin position="3475"/>
        <end position="3557"/>
    </location>
</feature>
<feature type="domain" description="RdRp Nsp8 cofactor" evidence="14">
    <location>
        <begin position="3558"/>
        <end position="3752"/>
    </location>
</feature>
<feature type="domain" description="Nsp9 ssRNA-binding" evidence="15">
    <location>
        <begin position="3753"/>
        <end position="3863"/>
    </location>
</feature>
<feature type="domain" description="ExoN/MTase coactivator" evidence="16">
    <location>
        <begin position="3864"/>
        <end position="4004"/>
    </location>
</feature>
<feature type="domain" description="NiRAN" evidence="11">
    <location>
        <begin position="4006"/>
        <end position="4255"/>
    </location>
</feature>
<feature type="domain" description="Nsp12 Interface" evidence="29">
    <location>
        <begin position="4261"/>
        <end position="4359"/>
    </location>
</feature>
<feature type="domain" description="Nsp12 RNA-dependent RNA polymerase" evidence="12">
    <location>
        <begin position="4360"/>
        <end position="4927"/>
    </location>
</feature>
<feature type="domain" description="RdRp catalytic">
    <location>
        <begin position="4607"/>
        <end position="4769"/>
    </location>
</feature>
<feature type="domain" description="CV ZBD" evidence="9">
    <location>
        <begin position="4928"/>
        <end position="5040"/>
    </location>
</feature>
<feature type="domain" description="(+)RNA virus helicase ATP-binding">
    <location>
        <begin position="5175"/>
        <end position="5366"/>
    </location>
</feature>
<feature type="domain" description="(+)RNA virus helicase C-terminal">
    <location>
        <begin position="5367"/>
        <end position="5536"/>
    </location>
</feature>
<feature type="domain" description="ExoN" evidence="17">
    <location>
        <begin position="5598"/>
        <end position="5812"/>
    </location>
</feature>
<feature type="domain" description="N7-MTase" evidence="18">
    <location>
        <begin position="5821"/>
        <end position="6042"/>
    </location>
</feature>
<feature type="domain" description="Nsp15 N-terminal oligomerization" evidence="21">
    <location>
        <begin position="6046"/>
        <end position="6106"/>
    </location>
</feature>
<feature type="domain" description="AV-Nsp11N/CoV-Nsp15M" evidence="22">
    <location>
        <begin position="6107"/>
        <end position="6224"/>
    </location>
</feature>
<feature type="domain" description="NendoU" evidence="20">
    <location>
        <begin position="6241"/>
        <end position="6381"/>
    </location>
</feature>
<feature type="domain" description="Nidovirus-type SAM-dependent 2'-O-MTase" evidence="19">
    <location>
        <begin position="6385"/>
        <end position="6681"/>
    </location>
</feature>
<feature type="zinc finger region" description="C4-type 1; degenerate" evidence="6">
    <location>
        <begin position="1164"/>
        <end position="1195"/>
    </location>
</feature>
<feature type="zinc finger region" description="C4-type 2; atypical" evidence="6">
    <location>
        <begin position="1667"/>
        <end position="1696"/>
    </location>
</feature>
<feature type="zinc finger region" evidence="1">
    <location>
        <begin position="3937"/>
        <end position="3953"/>
    </location>
</feature>
<feature type="zinc finger region" evidence="1">
    <location>
        <begin position="3979"/>
        <end position="3992"/>
    </location>
</feature>
<feature type="region of interest" description="C4" evidence="24">
    <location>
        <begin position="240"/>
        <end position="260"/>
    </location>
</feature>
<feature type="region of interest" description="Disordered" evidence="30">
    <location>
        <begin position="989"/>
        <end position="1032"/>
    </location>
</feature>
<feature type="region of interest" description="HD1">
    <location>
        <begin position="1896"/>
        <end position="2053"/>
    </location>
</feature>
<feature type="region of interest" description="Y1" evidence="27">
    <location>
        <begin position="2044"/>
        <end position="2134"/>
    </location>
</feature>
<feature type="region of interest" description="ZF1" evidence="27">
    <location>
        <begin position="2048"/>
        <end position="2061"/>
    </location>
</feature>
<feature type="region of interest" description="ZF2" evidence="27">
    <location>
        <begin position="2094"/>
        <end position="2104"/>
    </location>
</feature>
<feature type="region of interest" description="CoV-Y" evidence="27">
    <location>
        <begin position="2135"/>
        <end position="2384"/>
    </location>
</feature>
<feature type="region of interest" description="Y2" evidence="27">
    <location>
        <begin position="2135"/>
        <end position="2224"/>
    </location>
</feature>
<feature type="region of interest" description="Y3" evidence="27">
    <location>
        <begin position="2225"/>
        <end position="2281"/>
    </location>
</feature>
<feature type="region of interest" description="Y4" evidence="27">
    <location>
        <begin position="2282"/>
        <end position="2384"/>
    </location>
</feature>
<feature type="region of interest" description="HD2">
    <location>
        <begin position="2401"/>
        <end position="2766"/>
    </location>
</feature>
<feature type="region of interest" description="HD3">
    <location>
        <begin position="3187"/>
        <end position="3414"/>
    </location>
</feature>
<feature type="region of interest" description="RdRp Fingers N-ter" evidence="12">
    <location>
        <begin position="4362"/>
        <end position="4576"/>
    </location>
</feature>
<feature type="region of interest" description="RdRp Palm N-ter" evidence="12">
    <location>
        <begin position="4577"/>
        <end position="4615"/>
    </location>
</feature>
<feature type="region of interest" description="RdRp Fingers C-ter" evidence="12">
    <location>
        <begin position="4616"/>
        <end position="4674"/>
    </location>
</feature>
<feature type="region of interest" description="RdRp Palm C-ter" evidence="12">
    <location>
        <begin position="4675"/>
        <end position="4810"/>
    </location>
</feature>
<feature type="region of interest" description="RdRp Thumb" evidence="12">
    <location>
        <begin position="4811"/>
        <end position="4927"/>
    </location>
</feature>
<feature type="region of interest" description="GpppA-binding" evidence="18">
    <location>
        <begin position="5933"/>
        <end position="5947"/>
    </location>
</feature>
<feature type="compositionally biased region" description="Acidic residues" evidence="30">
    <location>
        <begin position="997"/>
        <end position="1015"/>
    </location>
</feature>
<feature type="active site" description="For PL1-PRO activity" evidence="6">
    <location>
        <position position="1093"/>
    </location>
</feature>
<feature type="active site" description="For PL1-PRO activity" evidence="6">
    <location>
        <position position="1244"/>
    </location>
</feature>
<feature type="active site" description="For PL1-PRO activity" evidence="6">
    <location>
        <position position="1257"/>
    </location>
</feature>
<feature type="active site" description="For PL2-PRO activity" evidence="6">
    <location>
        <position position="1588"/>
    </location>
</feature>
<feature type="active site" description="For PL2-PRO activity" evidence="6">
    <location>
        <position position="1741"/>
    </location>
</feature>
<feature type="active site" description="For PL2-PRO activity" evidence="6">
    <location>
        <position position="1754"/>
    </location>
</feature>
<feature type="active site" description="For 3CL-PRO activity" evidence="8">
    <location>
        <position position="2919"/>
    </location>
</feature>
<feature type="active site" description="For 3CL-PRO activity" evidence="8">
    <location>
        <position position="3022"/>
    </location>
</feature>
<feature type="active site" evidence="12">
    <location>
        <position position="4754"/>
    </location>
</feature>
<feature type="active site" evidence="12">
    <location>
        <position position="4755"/>
    </location>
</feature>
<feature type="active site" evidence="12">
    <location>
        <position position="4756"/>
    </location>
</feature>
<feature type="active site" evidence="17">
    <location>
        <position position="5616"/>
    </location>
</feature>
<feature type="active site" evidence="17">
    <location>
        <position position="5618"/>
    </location>
</feature>
<feature type="active site" evidence="17">
    <location>
        <position position="5717"/>
    </location>
</feature>
<feature type="active site" evidence="17">
    <location>
        <position position="5793"/>
    </location>
</feature>
<feature type="active site" evidence="17">
    <location>
        <position position="5798"/>
    </location>
</feature>
<feature type="active site" evidence="20">
    <location>
        <position position="6271"/>
    </location>
</feature>
<feature type="active site" evidence="20">
    <location>
        <position position="6286"/>
    </location>
</feature>
<feature type="active site" evidence="20">
    <location>
        <position position="6327"/>
    </location>
</feature>
<feature type="active site" evidence="19">
    <location>
        <position position="6429"/>
    </location>
</feature>
<feature type="active site" evidence="19">
    <location>
        <position position="6513"/>
    </location>
</feature>
<feature type="active site" evidence="19">
    <location>
        <position position="6553"/>
    </location>
</feature>
<feature type="active site" evidence="19">
    <location>
        <position position="6586"/>
    </location>
</feature>
<feature type="binding site" evidence="24">
    <location>
        <position position="240"/>
    </location>
    <ligand>
        <name>Zn(2+)</name>
        <dbReference type="ChEBI" id="CHEBI:29105"/>
        <label>1</label>
    </ligand>
</feature>
<feature type="binding site" evidence="24">
    <location>
        <position position="242"/>
    </location>
    <ligand>
        <name>Zn(2+)</name>
        <dbReference type="ChEBI" id="CHEBI:29105"/>
        <label>1</label>
    </ligand>
</feature>
<feature type="binding site" evidence="24">
    <location>
        <position position="259"/>
    </location>
    <ligand>
        <name>Zn(2+)</name>
        <dbReference type="ChEBI" id="CHEBI:29105"/>
        <label>1</label>
    </ligand>
</feature>
<feature type="binding site" evidence="24">
    <location>
        <position position="260"/>
    </location>
    <ligand>
        <name>Zn(2+)</name>
        <dbReference type="ChEBI" id="CHEBI:29105"/>
        <label>1</label>
    </ligand>
</feature>
<feature type="binding site" evidence="6">
    <location>
        <position position="1667"/>
    </location>
    <ligand>
        <name>Zn(2+)</name>
        <dbReference type="ChEBI" id="CHEBI:29105"/>
        <label>2</label>
    </ligand>
</feature>
<feature type="binding site" evidence="6">
    <location>
        <position position="1670"/>
    </location>
    <ligand>
        <name>Zn(2+)</name>
        <dbReference type="ChEBI" id="CHEBI:29105"/>
        <label>2</label>
    </ligand>
</feature>
<feature type="binding site" evidence="6">
    <location>
        <position position="1694"/>
    </location>
    <ligand>
        <name>Zn(2+)</name>
        <dbReference type="ChEBI" id="CHEBI:29105"/>
        <label>2</label>
    </ligand>
</feature>
<feature type="binding site" evidence="6">
    <location>
        <position position="1696"/>
    </location>
    <ligand>
        <name>Zn(2+)</name>
        <dbReference type="ChEBI" id="CHEBI:29105"/>
        <label>2</label>
    </ligand>
</feature>
<feature type="binding site" evidence="27">
    <location>
        <position position="2048"/>
    </location>
    <ligand>
        <name>Zn(2+)</name>
        <dbReference type="ChEBI" id="CHEBI:29105"/>
        <label>3</label>
    </ligand>
</feature>
<feature type="binding site" evidence="27">
    <location>
        <position position="2053"/>
    </location>
    <ligand>
        <name>Zn(2+)</name>
        <dbReference type="ChEBI" id="CHEBI:29105"/>
        <label>3</label>
    </ligand>
</feature>
<feature type="binding site" evidence="27">
    <location>
        <position position="2058"/>
    </location>
    <ligand>
        <name>Zn(2+)</name>
        <dbReference type="ChEBI" id="CHEBI:29105"/>
        <label>3</label>
    </ligand>
</feature>
<feature type="binding site" evidence="27">
    <location>
        <position position="2061"/>
    </location>
    <ligand>
        <name>Zn(2+)</name>
        <dbReference type="ChEBI" id="CHEBI:29105"/>
        <label>3</label>
    </ligand>
</feature>
<feature type="binding site" evidence="27">
    <location>
        <position position="2094"/>
    </location>
    <ligand>
        <name>Zn(2+)</name>
        <dbReference type="ChEBI" id="CHEBI:29105"/>
        <label>4</label>
    </ligand>
</feature>
<feature type="binding site" evidence="27">
    <location>
        <position position="2097"/>
    </location>
    <ligand>
        <name>Zn(2+)</name>
        <dbReference type="ChEBI" id="CHEBI:29105"/>
        <label>4</label>
    </ligand>
</feature>
<feature type="binding site" evidence="27">
    <location>
        <position position="2101"/>
    </location>
    <ligand>
        <name>Zn(2+)</name>
        <dbReference type="ChEBI" id="CHEBI:29105"/>
        <label>4</label>
    </ligand>
</feature>
<feature type="binding site" evidence="27">
    <location>
        <position position="2104"/>
    </location>
    <ligand>
        <name>Zn(2+)</name>
        <dbReference type="ChEBI" id="CHEBI:29105"/>
        <label>4</label>
    </ligand>
</feature>
<feature type="binding site" evidence="16">
    <location>
        <position position="3937"/>
    </location>
    <ligand>
        <name>Zn(2+)</name>
        <dbReference type="ChEBI" id="CHEBI:29105"/>
        <label>5</label>
    </ligand>
</feature>
<feature type="binding site" evidence="16">
    <location>
        <position position="3940"/>
    </location>
    <ligand>
        <name>Zn(2+)</name>
        <dbReference type="ChEBI" id="CHEBI:29105"/>
        <label>5</label>
    </ligand>
</feature>
<feature type="binding site" evidence="16">
    <location>
        <position position="3946"/>
    </location>
    <ligand>
        <name>Zn(2+)</name>
        <dbReference type="ChEBI" id="CHEBI:29105"/>
        <label>5</label>
    </ligand>
</feature>
<feature type="binding site" evidence="16">
    <location>
        <position position="3953"/>
    </location>
    <ligand>
        <name>Zn(2+)</name>
        <dbReference type="ChEBI" id="CHEBI:29105"/>
        <label>5</label>
    </ligand>
</feature>
<feature type="binding site" evidence="16">
    <location>
        <position position="3979"/>
    </location>
    <ligand>
        <name>Zn(2+)</name>
        <dbReference type="ChEBI" id="CHEBI:29105"/>
        <label>6</label>
    </ligand>
</feature>
<feature type="binding site" evidence="16">
    <location>
        <position position="3982"/>
    </location>
    <ligand>
        <name>Zn(2+)</name>
        <dbReference type="ChEBI" id="CHEBI:29105"/>
        <label>6</label>
    </ligand>
</feature>
<feature type="binding site" evidence="16">
    <location>
        <position position="3990"/>
    </location>
    <ligand>
        <name>Zn(2+)</name>
        <dbReference type="ChEBI" id="CHEBI:29105"/>
        <label>6</label>
    </ligand>
</feature>
<feature type="binding site" evidence="16">
    <location>
        <position position="3992"/>
    </location>
    <ligand>
        <name>Zn(2+)</name>
        <dbReference type="ChEBI" id="CHEBI:29105"/>
        <label>6</label>
    </ligand>
</feature>
<feature type="binding site" evidence="29">
    <location>
        <position position="4290"/>
    </location>
    <ligand>
        <name>Zn(2+)</name>
        <dbReference type="ChEBI" id="CHEBI:29105"/>
        <label>7</label>
    </ligand>
</feature>
<feature type="binding site" evidence="29">
    <location>
        <position position="4296"/>
    </location>
    <ligand>
        <name>Zn(2+)</name>
        <dbReference type="ChEBI" id="CHEBI:29105"/>
        <label>7</label>
    </ligand>
</feature>
<feature type="binding site" evidence="29">
    <location>
        <position position="4301"/>
    </location>
    <ligand>
        <name>Zn(2+)</name>
        <dbReference type="ChEBI" id="CHEBI:29105"/>
        <label>7</label>
    </ligand>
</feature>
<feature type="binding site" evidence="29">
    <location>
        <position position="4305"/>
    </location>
    <ligand>
        <name>Zn(2+)</name>
        <dbReference type="ChEBI" id="CHEBI:29105"/>
        <label>7</label>
    </ligand>
</feature>
<feature type="binding site" evidence="12">
    <location>
        <position position="4482"/>
    </location>
    <ligand>
        <name>Zn(2+)</name>
        <dbReference type="ChEBI" id="CHEBI:29105"/>
        <label>8</label>
    </ligand>
</feature>
<feature type="binding site" evidence="12">
    <location>
        <position position="4637"/>
    </location>
    <ligand>
        <name>Zn(2+)</name>
        <dbReference type="ChEBI" id="CHEBI:29105"/>
        <label>8</label>
    </ligand>
</feature>
<feature type="binding site" evidence="12">
    <location>
        <position position="4640"/>
    </location>
    <ligand>
        <name>Zn(2+)</name>
        <dbReference type="ChEBI" id="CHEBI:29105"/>
        <label>8</label>
    </ligand>
</feature>
<feature type="binding site" evidence="12">
    <location>
        <position position="4641"/>
    </location>
    <ligand>
        <name>Zn(2+)</name>
        <dbReference type="ChEBI" id="CHEBI:29105"/>
        <label>8</label>
    </ligand>
</feature>
<feature type="binding site" evidence="9">
    <location>
        <position position="4932"/>
    </location>
    <ligand>
        <name>Zn(2+)</name>
        <dbReference type="ChEBI" id="CHEBI:29105"/>
        <label>9</label>
    </ligand>
</feature>
<feature type="binding site" evidence="9">
    <location>
        <position position="4935"/>
    </location>
    <ligand>
        <name>Zn(2+)</name>
        <dbReference type="ChEBI" id="CHEBI:29105"/>
        <label>9</label>
    </ligand>
</feature>
<feature type="binding site" evidence="9">
    <location>
        <position position="4943"/>
    </location>
    <ligand>
        <name>Zn(2+)</name>
        <dbReference type="ChEBI" id="CHEBI:29105"/>
        <label>10</label>
    </ligand>
</feature>
<feature type="binding site" evidence="9">
    <location>
        <position position="4946"/>
    </location>
    <ligand>
        <name>Zn(2+)</name>
        <dbReference type="ChEBI" id="CHEBI:29105"/>
        <label>10</label>
    </ligand>
</feature>
<feature type="binding site" evidence="9">
    <location>
        <position position="4953"/>
    </location>
    <ligand>
        <name>Zn(2+)</name>
        <dbReference type="ChEBI" id="CHEBI:29105"/>
        <label>9</label>
    </ligand>
</feature>
<feature type="binding site" evidence="9">
    <location>
        <position position="4956"/>
    </location>
    <ligand>
        <name>Zn(2+)</name>
        <dbReference type="ChEBI" id="CHEBI:29105"/>
        <label>9</label>
    </ligand>
</feature>
<feature type="binding site" evidence="9">
    <location>
        <position position="4960"/>
    </location>
    <ligand>
        <name>Zn(2+)</name>
        <dbReference type="ChEBI" id="CHEBI:29105"/>
        <label>10</label>
    </ligand>
</feature>
<feature type="binding site" evidence="9">
    <location>
        <position position="4966"/>
    </location>
    <ligand>
        <name>Zn(2+)</name>
        <dbReference type="ChEBI" id="CHEBI:29105"/>
        <label>10</label>
    </ligand>
</feature>
<feature type="binding site" evidence="9">
    <location>
        <position position="4977"/>
    </location>
    <ligand>
        <name>Zn(2+)</name>
        <dbReference type="ChEBI" id="CHEBI:29105"/>
        <label>11</label>
    </ligand>
</feature>
<feature type="binding site" evidence="9">
    <location>
        <position position="4982"/>
    </location>
    <ligand>
        <name>Zn(2+)</name>
        <dbReference type="ChEBI" id="CHEBI:29105"/>
        <label>11</label>
    </ligand>
</feature>
<feature type="binding site" evidence="9">
    <location>
        <position position="4999"/>
    </location>
    <ligand>
        <name>Zn(2+)</name>
        <dbReference type="ChEBI" id="CHEBI:29105"/>
        <label>11</label>
    </ligand>
</feature>
<feature type="binding site" evidence="9">
    <location>
        <position position="5002"/>
    </location>
    <ligand>
        <name>Zn(2+)</name>
        <dbReference type="ChEBI" id="CHEBI:29105"/>
        <label>11</label>
    </ligand>
</feature>
<feature type="binding site" evidence="1">
    <location>
        <begin position="5210"/>
        <end position="5217"/>
    </location>
    <ligand>
        <name>ATP</name>
        <dbReference type="ChEBI" id="CHEBI:30616"/>
    </ligand>
</feature>
<feature type="binding site" evidence="17">
    <location>
        <position position="5733"/>
    </location>
    <ligand>
        <name>Zn(2+)</name>
        <dbReference type="ChEBI" id="CHEBI:29105"/>
        <label>12</label>
    </ligand>
</feature>
<feature type="binding site" evidence="17">
    <location>
        <position position="5735"/>
    </location>
    <ligand>
        <name>Zn(2+)</name>
        <dbReference type="ChEBI" id="CHEBI:29105"/>
        <label>12</label>
    </ligand>
</feature>
<feature type="binding site" evidence="17">
    <location>
        <position position="5751"/>
    </location>
    <ligand>
        <name>Zn(2+)</name>
        <dbReference type="ChEBI" id="CHEBI:29105"/>
        <label>12</label>
    </ligand>
</feature>
<feature type="binding site" evidence="17">
    <location>
        <position position="5754"/>
    </location>
    <ligand>
        <name>Zn(2+)</name>
        <dbReference type="ChEBI" id="CHEBI:29105"/>
        <label>12</label>
    </ligand>
</feature>
<feature type="binding site" evidence="17">
    <location>
        <position position="5782"/>
    </location>
    <ligand>
        <name>Zn(2+)</name>
        <dbReference type="ChEBI" id="CHEBI:29105"/>
        <label>13</label>
    </ligand>
</feature>
<feature type="binding site" evidence="17">
    <location>
        <position position="5786"/>
    </location>
    <ligand>
        <name>Zn(2+)</name>
        <dbReference type="ChEBI" id="CHEBI:29105"/>
        <label>13</label>
    </ligand>
</feature>
<feature type="binding site" evidence="17">
    <location>
        <position position="5789"/>
    </location>
    <ligand>
        <name>Zn(2+)</name>
        <dbReference type="ChEBI" id="CHEBI:29105"/>
        <label>13</label>
    </ligand>
</feature>
<feature type="binding site" evidence="17">
    <location>
        <position position="5804"/>
    </location>
    <ligand>
        <name>Zn(2+)</name>
        <dbReference type="ChEBI" id="CHEBI:29105"/>
        <label>13</label>
    </ligand>
</feature>
<feature type="binding site" evidence="18">
    <location>
        <begin position="5856"/>
        <end position="5862"/>
    </location>
    <ligand>
        <name>S-adenosyl-L-methionine</name>
        <dbReference type="ChEBI" id="CHEBI:59789"/>
    </ligand>
</feature>
<feature type="binding site" evidence="18">
    <location>
        <position position="5971"/>
    </location>
    <ligand>
        <name>Zn(2+)</name>
        <dbReference type="ChEBI" id="CHEBI:29105"/>
        <label>14</label>
    </ligand>
</feature>
<feature type="binding site" evidence="18">
    <location>
        <position position="5988"/>
    </location>
    <ligand>
        <name>Zn(2+)</name>
        <dbReference type="ChEBI" id="CHEBI:29105"/>
        <label>14</label>
    </ligand>
</feature>
<feature type="binding site" evidence="18">
    <location>
        <position position="5999"/>
    </location>
    <ligand>
        <name>Zn(2+)</name>
        <dbReference type="ChEBI" id="CHEBI:29105"/>
        <label>14</label>
    </ligand>
</feature>
<feature type="binding site" evidence="18">
    <location>
        <position position="6002"/>
    </location>
    <ligand>
        <name>Zn(2+)</name>
        <dbReference type="ChEBI" id="CHEBI:29105"/>
        <label>14</label>
    </ligand>
</feature>
<feature type="site" description="Cleavage; by PL1-PRO" evidence="1">
    <location>
        <begin position="110"/>
        <end position="111"/>
    </location>
</feature>
<feature type="site" description="Cleavage; by PL1-PRO" evidence="1">
    <location>
        <begin position="879"/>
        <end position="880"/>
    </location>
</feature>
<feature type="site" description="Cleavage; by PL2-PRO" evidence="1">
    <location>
        <begin position="2388"/>
        <end position="2389"/>
    </location>
</feature>
<feature type="site" description="Cleavage; by 3CL-PRO" evidence="1">
    <location>
        <begin position="2878"/>
        <end position="2879"/>
    </location>
</feature>
<feature type="site" description="Cleavage; by 3CL-PRO" evidence="1">
    <location>
        <begin position="3180"/>
        <end position="3181"/>
    </location>
</feature>
<feature type="site" description="Cleavage; by 3CL-PRO" evidence="1">
    <location>
        <begin position="3474"/>
        <end position="3475"/>
    </location>
</feature>
<feature type="site" description="Cleavage; by 3CL-PRO" evidence="1">
    <location>
        <begin position="3557"/>
        <end position="3558"/>
    </location>
</feature>
<feature type="site" description="Cleavage; by 3CL-PRO" evidence="1">
    <location>
        <begin position="3752"/>
        <end position="3753"/>
    </location>
</feature>
<feature type="site" description="Cleavage; by 3CL-PRO" evidence="1">
    <location>
        <begin position="3863"/>
        <end position="3864"/>
    </location>
</feature>
<feature type="site" description="Cleavage; by 3CL-PRO" evidence="1">
    <location>
        <begin position="3998"/>
        <end position="3999"/>
    </location>
</feature>
<feature type="site" description="Cleavage; by 3CL-PRO" evidence="1">
    <location>
        <begin position="4927"/>
        <end position="4928"/>
    </location>
</feature>
<feature type="site" description="Cleavage; by 3CL-PRO" evidence="1">
    <location>
        <begin position="5526"/>
        <end position="5527"/>
    </location>
</feature>
<feature type="site" description="Cleavage; by 3CL-PRO" evidence="1">
    <location>
        <begin position="6045"/>
        <end position="6046"/>
    </location>
</feature>
<feature type="site" description="Cleavage; by 3CL-PRO" evidence="1">
    <location>
        <begin position="6384"/>
        <end position="6385"/>
    </location>
</feature>
<feature type="disulfide bond" evidence="28">
    <location>
        <begin position="1921"/>
        <end position="1948"/>
    </location>
</feature>
<feature type="disulfide bond" evidence="28">
    <location>
        <begin position="1939"/>
        <end position="1945"/>
    </location>
</feature>
<feature type="sequence variant" description="In strain: Isolate Purdue-115.">
    <original>F</original>
    <variation>S</variation>
    <location>
        <position position="572"/>
    </location>
</feature>
<feature type="sequence variant" description="In strain: Isolate Purdue-115.">
    <original>E</original>
    <variation>D</variation>
    <location>
        <position position="1041"/>
    </location>
</feature>
<feature type="sequence variant" description="In strain: Isolate Purdue-115.">
    <original>P</original>
    <variation>T</variation>
    <location>
        <position position="2375"/>
    </location>
</feature>
<feature type="sequence variant" description="In strain: Isolate Purdue-115.">
    <original>E</original>
    <variation>Q</variation>
    <location>
        <position position="2381"/>
    </location>
</feature>
<feature type="sequence variant" description="In strain: Isolate Purdue-115.">
    <original>P</original>
    <variation>A</variation>
    <location>
        <position position="5276"/>
    </location>
</feature>
<feature type="sequence variant" description="In strain: Isolate Purdue-115.">
    <original>V</original>
    <variation>I</variation>
    <location>
        <position position="6054"/>
    </location>
</feature>
<feature type="sequence variant" description="In strain: Isolate Purdue-115.">
    <original>D</original>
    <variation>V</variation>
    <location>
        <position position="6421"/>
    </location>
</feature>
<feature type="sequence variant" description="In strain: Isolate Purdue-115.">
    <original>NV</original>
    <variation>KF</variation>
    <location>
        <begin position="6426"/>
        <end position="6427"/>
    </location>
</feature>
<feature type="strand" evidence="36">
    <location>
        <begin position="3"/>
        <end position="10"/>
    </location>
</feature>
<feature type="helix" evidence="36">
    <location>
        <begin position="23"/>
        <end position="36"/>
    </location>
</feature>
<feature type="strand" evidence="36">
    <location>
        <begin position="41"/>
        <end position="45"/>
    </location>
</feature>
<feature type="helix" evidence="36">
    <location>
        <begin position="46"/>
        <end position="51"/>
    </location>
</feature>
<feature type="strand" evidence="36">
    <location>
        <begin position="59"/>
        <end position="75"/>
    </location>
</feature>
<feature type="strand" evidence="36">
    <location>
        <begin position="84"/>
        <end position="90"/>
    </location>
</feature>
<feature type="strand" evidence="36">
    <location>
        <begin position="96"/>
        <end position="104"/>
    </location>
</feature>
<feature type="turn" evidence="34">
    <location>
        <begin position="2889"/>
        <end position="2891"/>
    </location>
</feature>
<feature type="helix" evidence="34">
    <location>
        <begin position="2892"/>
        <end position="2894"/>
    </location>
</feature>
<feature type="strand" evidence="34">
    <location>
        <begin position="2895"/>
        <end position="2900"/>
    </location>
</feature>
<feature type="strand" evidence="34">
    <location>
        <begin position="2903"/>
        <end position="2910"/>
    </location>
</feature>
<feature type="strand" evidence="34">
    <location>
        <begin position="2913"/>
        <end position="2917"/>
    </location>
</feature>
<feature type="helix" evidence="34">
    <location>
        <begin position="2918"/>
        <end position="2921"/>
    </location>
</feature>
<feature type="helix" evidence="34">
    <location>
        <begin position="2931"/>
        <end position="2936"/>
    </location>
</feature>
<feature type="helix" evidence="34">
    <location>
        <begin position="2940"/>
        <end position="2942"/>
    </location>
</feature>
<feature type="strand" evidence="34">
    <location>
        <begin position="2944"/>
        <end position="2947"/>
    </location>
</feature>
<feature type="strand" evidence="34">
    <location>
        <begin position="2950"/>
        <end position="2952"/>
    </location>
</feature>
<feature type="strand" evidence="34">
    <location>
        <begin position="2954"/>
        <end position="2960"/>
    </location>
</feature>
<feature type="strand" evidence="34">
    <location>
        <begin position="2963"/>
        <end position="2970"/>
    </location>
</feature>
<feature type="strand" evidence="35">
    <location>
        <begin position="2978"/>
        <end position="2980"/>
    </location>
</feature>
<feature type="strand" evidence="34">
    <location>
        <begin position="2988"/>
        <end position="2995"/>
    </location>
</feature>
<feature type="strand" evidence="34">
    <location>
        <begin position="2998"/>
        <end position="3006"/>
    </location>
</feature>
<feature type="strand" evidence="34">
    <location>
        <begin position="3025"/>
        <end position="3030"/>
    </location>
</feature>
<feature type="strand" evidence="34">
    <location>
        <begin position="3033"/>
        <end position="3043"/>
    </location>
</feature>
<feature type="strand" evidence="34">
    <location>
        <begin position="3049"/>
        <end position="3052"/>
    </location>
</feature>
<feature type="helix" evidence="34">
    <location>
        <begin position="3059"/>
        <end position="3061"/>
    </location>
</feature>
<feature type="strand" evidence="34">
    <location>
        <begin position="3064"/>
        <end position="3066"/>
    </location>
</feature>
<feature type="helix" evidence="34">
    <location>
        <begin position="3078"/>
        <end position="3090"/>
    </location>
</feature>
<feature type="helix" evidence="34">
    <location>
        <begin position="3104"/>
        <end position="3111"/>
    </location>
</feature>
<feature type="turn" evidence="34">
    <location>
        <begin position="3112"/>
        <end position="3115"/>
    </location>
</feature>
<feature type="helix" evidence="34">
    <location>
        <begin position="3123"/>
        <end position="3125"/>
    </location>
</feature>
<feature type="helix" evidence="34">
    <location>
        <begin position="3126"/>
        <end position="3132"/>
    </location>
</feature>
<feature type="helix" evidence="34">
    <location>
        <begin position="3136"/>
        <end position="3146"/>
    </location>
</feature>
<feature type="strand" evidence="34">
    <location>
        <begin position="3158"/>
        <end position="3160"/>
    </location>
</feature>
<feature type="helix" evidence="34">
    <location>
        <begin position="3167"/>
        <end position="3173"/>
    </location>
</feature>
<sequence>MSSKQFKILVNEDYQVNVPSLPIRDVLQEIKYCYRNGFEGYVFVPEYCRDLVDCDRKDHYVIGVLGNGVSDLKPVLLTEPSVMLQGFIVRANCNGVLEDFDLKIARTGRGAIYVDQYMCGADGKPVIEGDFKDYFGDEDIIEFEGEEYHCAWTTVRDEKPLNQQTLFTIQEIQYNLDIPHKLPNCATRHVAPPVKKNSKIVLSEDYKKLYDIFGSPFMGNGDCLSKCFDTLHFIAATLRCPCGSESSGVGDWTGFKTACCGLSGKVKGVTLGDIKPGDAVVTSMSAGKGVKFFANCVLQYAGDVEGVSIWKVIKTFTVDETVCTPGFEGELNDFIKPESKSLVACSVKRAFITGDIDDAVHDCIITGKLDLSTNLFGNVGLLFKKTPWFVQKCGALFVDAWKVVEELCGSLTLTYKQIYEVVASLCTSAFTIVNYKPTFVVPDNRVKDLVDKCVKVLVKAFDVFTQIITIAGIEAKCFVLGAKYLLFNNALVKLVSVKILGKKQKGLECAFFATSLVGATVNVTPKRTETATISLNKVDDVVAPGEGYIVIVGDMAFYKSGEYYFMMSSPNFVLTNNVFKAVKVPSYDIVYDVDNDTKSKMIAKLGSSFEYDGDIDAAIVKVNELLIEFRQQSLCFRAFKDDKSIFVEAYFKKYKMPACLAKHIGLWNIIKKDSCKRGFLNLFNHLNELEDIKETNIQAIKNILCPDPLLDLDYGAIWYNCMPGCSDPSVLGSVQLLIGNGVKVVCDGCKGFANQLSKGYNKLCNAARNDIEIGGIPFSTFKTPTNTFIEMTDAIYSVIEQGKALSFRDADVPVVDNGTISTADWSEPILLEPAEYVKPKNNGNVIVIAGYTFYKDEDEHFYPYGFGKIVQRMYNKMGGGDKTVSFSEEVDVQEIAPVTRVKLEFEFDNEIVTGVLERAIGTRYKFTGTTWEEFEESISEELDAIFDTLANQGVELEGYFIYDTCGGFDIKNPDGIMISQYDINITADEKSEVSASSEEEEVESVEEDPENEIVEASEGAEGTSSQEEVETVEVADITSTEEDVDIVEVSAKDDPWAAAVDVQEAEQFNPSLPPFKTTNLNGKIILKQGDNNCWINACCYQLQAFDFFNNEAWEKFKKGDVMDFVNLCYAATTLARGHSGDAEYLLELMLNDYSTAKIVLAAKCGCGEKEIVLERAVFKLTPLKESFNYGVCGDCMQVNTCRFLSVEGSGVFVHDILSKQTPEAMFVVKPVMHAVYTGTTQNGHYMVDDIEHGYCVDGMGIKPLKKRCYTSTLFINANVMTRAEKPKQEFKVEKVEQQPIVEENKSSIEKEEIQSPKNDDLILPFYKAGKLSFYQGALDVLINFLEPDVIVNAANGDLKHMGGVARAIDVFTGGKLTERSKDYLKKNKSIAPGNAVFFENVIEHLSVLNAVGPRNGDSRVEAKLCNVYKAIAKCEGKILTPLISVGIFNVRLETSLQCLLKTVNDRGLNVFVYTDQERQTIENFFSCSIPVNVTEDNVNHERVSVSFDKTYGEQLKGTVVIKDKDVTNQLPSAFDVGQKVIKAIDIDWQAHYGFRDAAAFSASSHDAYKFEVVTHSNFIVHKQTDNNCWINAICLALQRLKPQWKFPGVRGLWNEFLERKTQGFVHMLYHISGVKKGEPGDAELMLHKLGDLMDNDCEIIVTHTTACDKCAKVEKFVGPVVAAPLAIHGTDETCVHGVSVNVKVTQIKGTVAITSLIGPIIGEVLEATGYICYSGSNRNGHYTYYDNRNGLVVDAEKAYHFNRDLLQVTTAIASNFVVKKPQAEERPKNCAFNKVAASPKIVQEQKLLAIESGANYALTEFGRYADMFFMAGDKILRLLLEVFKYLLVLFMCLRSTKMPKVKVKPPLAFKDFGAKVRTLNYMRQLNKPSVWRYAKLVLLLIAIYNFFYLFVSIPVVHKLTCNGAVQAYKNSSFIKSAVCGNSILCKACLASYDELADFQHLQVTWDFKSDPLWNRLVQLSYFAFLAVFGNNYVRCFLMYFVSQYLNLWLSYFGYVEYSWFLHVVNFESISAEFVIVVIVVKAVLALKHIVFACSNPSCKTCSRTARQTRIPIQVVVNGSMKTVYVHANGTGKFCKKHNFYCKNCDSYGFENTFICDEIVRDLSNSVKQTVYATDRSHQEVTKVECSDGFYRFYVGDEFTSYDYDVKHKKYSSQEVLKSMLLLDDFIVYSPSGSALANVRNACVYFSQLIGKPIKIVNSDLLEDLSVDFKGALFNAKKNVIKNSFNVDVSECKNLDECYRACNLNVSFSTFEMAVNNAHRFGILITDRSFNNFWPSKVKPGSSGVSAMDIGKCMTSDAKIVNAKVLTQRGKSVVWLSQDFAALSSTAQKVLVKTFVEEGVNFSLTFNAVGSDDDLPYERFTESVSPKSGSGFFDVITQLKQIVILVFVFIFICGLCSVYSVATQSYIESAEGYDYMVIKNGIVQPFDDTISCVHNTYKGFGDWFKAKYGFIPTFGKSCPIVVGTVFDLENMRPIPDVPAYVSIVGRSLVFAINAAFGVTNMCYDHTGNAVSKDSYFDTCVFNTACTTLTGLGGTIVYCAKQGLVEGAKLYSDLMPDYYYEHASGNMVKLPAIIRGLGLRFVKTQATTYCRVGECIDSKAGFCFGGDNWFVYDNEFGNGYICGNSVLGFFKNVFKLFNSNMSVVATSGAMLVNIIIACLAIAMCYGVLKFKKIFGDCTFLIVMIIVTLVVNNVSYFVTQNTFFMIIYAIVYYFITRKLAYPGILDAGFIIAYINMAPWYVITAYILVFLYDSLPSLFKLKVSTNLFEGDKFVGNFESAAMGTFVIDMRSYETIVNSTSIARIKSYANSFNKYKYYTGSMGEADYRMACYAHLGKALMDYSVNRTDMLYTPPTVSVNSTLQSGLRKMAQPSGLVEPCIVRVSYGNNVLNGLWLGDEVICPRHVIASDTTRVINYENEMSSVRLHNFSVSKNNVFLGVVSARYKGVNLVLKVNQVNPNTPEHKFKSIKAGESFNILACYEGCPGSVYGVNMRSQGTIKGSFIAGTCGSVGYVLENGILYFVYMHHLELGNGSHVGSNFEGEMYGGYEDQPSMQLEGTNVMSSDNVVAFLYAALINGERWFVTNTSMSLESYNTWAKTNSFTELSSTDAFSMLAAKTGQSVEKLLDSIVRLNKGFGGRTILSYGSLCDEFTPTEVIRQMYGVNLQAGKVKSFFYPIMTAMTILFAFWLEFFMYTPFTWINPTFVSIVLAVTTLISTVFVSGIKHKMLFFMSFVLPSVILVTAHNLFWDFSYYESLQSIVENTNTMFLPVDMQGVMLTVFCFIVFVTYSVRFFTCKQSWFSLAVTTILVIFNMVKIFGTSDEPWTENQIAFCFVNMLTMIVSLTTKDWMVVIASYRIAYYIVVCVMPSAFVSDFGFMKCISIVYMACGYLFCCYYGILYWVNRFTCMTCGVYQFTVSAAELKYMTANNLSAPKNAYDAMILSAKLIGVGGKRNIKISTVQSKLTEMKCTNVVLLGLLSKMHVESNSKEWNYCVGLHNEINLCDDPEIVLEKLLALIAFFLSKHNTCDLSELIESYFENTTILQSVASAYAALPSWIALEKARADLEEAKKNDVSPQILKQLTKAFNIAKSDFEREASVQKKLDKMAEQAAASMYKEARAVDRKSKIVSAMHSLLFGMLKKLDMSSVNTIIDQARNGVLPLSIIPAASATRLVVITPSLEVFSKIRQENNVHYAGAIWTIVEVKDANGSHVHLKEVTAANELNLTWPLSITCERTTKLQNNEIMPGKLKERAVRASATLDGEAFGSGKALMASESGKSFMYAFIASDNNLKYVKWESNNDIIPIELEAPLRFYVDGANGPEVKYLYFVKNLNTLRRGAVLGYIGATVRLQAGKPTEHPSNSSLLTLCAFSPDPAKAYVDAVKRGMQPVNNCVKMLSNGAGNGMAVTNGVEANTQQDSYGGASVCIYCRCHVEHPAIDGLCRYKGKFVQIPTGTQDPIRFCIENEVCVVCGCWLNNGCMCDRTSMQSFTVDQSYLNRVRGSSAARLEPCNGTDPDHVSRAFDIYNKDVACIGKFLKTNCSRFRNLDKHDAYYIVKRCTKTVMDHEQVCYNDLKDSGAVAEHDFFTYKEGRCEFGNVARRNLTKYTMMDLCYAIRNFDEKNCEVLKEILVTVGACTEEFFENKDWFDPVENEAIHEVYAKLGPIVANAMLKCVAFCDAIVEKGYIGVITLDNQDLNGNFYDFGDFVKTAPGFGCACVTSYYSYMMPLMGMTSCLESENFVKSDIYGSDYKQYDLLAYDFTEHKEYLFQKYFKYWDRTYHPNCSDCTSDECIIHCANFNTLFSMTIPMTAFGPLVRKVHIDGVPVVVTAGYHFKQLGIVWNLDVKLDTMKLSMTDLLRFVTDPTLLVASSPALLDQRTVCFSIAALSTGITYQTVKPGHFNKDFYDFITERGFFEEGSELTLKHFFFAQGGEAAMTDFNYYRYNRVTVLDICQAQFVYKIVGKYFECYDGGCINAREVVVTNYDKSAGYPLNKFGKARLYYETLSYEEQDALFALTKRNVLPTMTQMNLKYAISGKARARTVGGVSLLSTMTTRQYHQKHLKSIAATRNATVVIGSTKFYGGWDNMLKNLMRDVDNGCLMGWDYPKCDRALPNMIRMASAMILGSKHVGCCTHNDRFYRLSNELAQVLTEVVHCTGGFYFKPGGTTSGDGTTAYANSAFNIFQAVSANVNKLLGVDSNACNNVTVKSIQRKIYDNCYRSSSIDEEFVVEYFSYLRKHFSMMILSDDGVVCYNKDYADLGYVADINAFKATLYYQNNVFMSTSKCWVEPDLSVGPHEFCSQHTLQIVGPDGDYYLPYPDPSRILSAGVFVDDIVKTDNVIMLERYVSLAIDAYPLTKHPKPAYQKVFYTLLDWVKHLQKNLNAGVLDSFSVTMLEEGQDKFWSEEFYASLYEKSTVLQAAGMCVVCGSQTVLRCGDCLRRPLLCTKCAYDHVMGTKHKFIMSITPYVCSFNGCNVNDVTKLFLGGLSYYCMNHKPQLSFPLCANGNVFGLYKSSAVGSEAVEDFNKLAVSDWTNVEDYKLANNVKESLKIFAAETVKAKEESVKSEYAYAVLKEVIGPKEIVLQWEASKTKPPLNRNSVFTCFQISKDTKIQLGEFVFEQSEYGSDSVYYKSTSTYKLTPGMIFVLTSHNVSPLKAPILVNQEKYNTISKLYPVFNIAEAYNTLVPYYQMIGKQKFTTIQGPPGSGKSHCVIGLGLYYPQARIVYTACSHAAVDALCEKAAKNFNVDRCSRIIPQRIRVDCYTGFKPNNTNAQYLFCTVNALPEASCDIVVVDEVSMCTNYDLSVINSRLSYKHIVYVGDPQQLPAPRTLINKGVLQPQDYNVVTKRMCTLGPDVFLHKCYRCPAEIVKTVSALVYENKFVPVNPESKQCFKMFVKGQVQIESNSSINNKQLEVVKAFLAHNPKWRKAVFISPYNSQNYVARRLLGLQTQTVDSAQGSEYDYVIYTQTSDTQHATNVNRFNVAITRAKVGILCIMCDRTMYENLDFYELKDSKIGLQAKPETCGLFKDCSKSEQYIPPAYATTYMSLSDNFKTSDGLAVNIGTKDVKYANVISYMGFRFEANIPGYHTLFCTRDFAMRNVRAWLGFDVEGAHVCGDNVGTNVPLQLGFSNGVDFVVQTEGCVITEKGNSIEVVKARAPPGEQFAHLIPLMRKGQPWHIVRRRIVQMVCDYFDGLSDILIFVLWAGGLELTTMRYFVKIGRPQKCECGKSATCYSSSQSVYACFKHALGCDYLYNPYCIDIQQWGYTGSLSMNHHEVCNIHRNEHVASGDAIMTRCLAIHDCFVKRVDWSIVYPFIDNEEKINKAGRIVQSHVMKAALKIFNPAAIHDVGNPKGIRCATTPIPWFCYDRDPINNNVRCLDYDYMVHGQMNGLMLFWNCNVDMYPEFSIVCRFDTRTRSKLSLEGCNGGALYVNNHAFHTPAYDRRAFAKLKPMPFFYYDDSNCELVDGQPNYVPLKSNVCITKCNIGGAVCKKHAALYRAYVEDYNIFMQAGFTIWCPQNFDTYMLWHGFVNSKALQSLENVAFNVVKKGAFTGLKGDLPTAVIADKIMVRDGPTDKCIFTNKTSLPTNVAFELYAKRKLGLTPPLTILRNLGVVATYKFVLWDYEAERPFSNFTKQVCSYTDLDSEVVTCFDNSIAGSFERFTTTRDAVLISNNAVKGLSAIKLQYGLLNDLPVSTVGNKPVTWYIYVRKNGEYVEQIDSYYTQGRTFETFKPRSTMEEDFLSMDTTLFIQKYGLEDYGFEHVVFGDVSKTTIGGMHLLISQVRLAKMGLFSVQEFMNNSDSTLKSCCITYADDPSSKNVCTYMDILLDDFVTIIKSLDLNVVSKVVDVIVDCKAWRWMLWCENSHIKTFYPQLQSAEWNPGYSMPTLYKIQRMCLERCNLYNYGAQVKLPDGITTNVVKYTQLCQYLNTTTLCVPHKMRVLHLGAAGASGVAPGSTVLRRWLPDDAILVDNDLRDYVSDADFSVTGDCTSLYIEDKFDLLVSDLYDGSTKSIDGENTSKDGFFTYINGFIKEKLSLGGSVAIKITEFSWNKDLYELIQRFEYWTVFCTSVNTSSSEGFLIGINYLGPYCDKAIVDGNIMHANYIFWRNSTIMALSHNSVLDTPKFKCRCNNALIVNLKEKELNEMVIGLLRKGKLLIRNNGKLLNFGNHFVNTP</sequence>
<organism>
    <name type="scientific">Porcine transmissible gastroenteritis coronavirus (strain Purdue)</name>
    <name type="common">TGEV</name>
    <dbReference type="NCBI Taxonomy" id="11151"/>
    <lineage>
        <taxon>Viruses</taxon>
        <taxon>Riboviria</taxon>
        <taxon>Orthornavirae</taxon>
        <taxon>Pisuviricota</taxon>
        <taxon>Pisoniviricetes</taxon>
        <taxon>Nidovirales</taxon>
        <taxon>Cornidovirineae</taxon>
        <taxon>Coronaviridae</taxon>
        <taxon>Orthocoronavirinae</taxon>
        <taxon>Alphacoronavirus</taxon>
        <taxon>Tegacovirus</taxon>
        <taxon>Alphacoronavirus 1</taxon>
    </lineage>
</organism>
<evidence type="ECO:0000250" key="1"/>
<evidence type="ECO:0000250" key="2">
    <source>
        <dbReference type="UniProtKB" id="P0C6X7"/>
    </source>
</evidence>
<evidence type="ECO:0000250" key="3">
    <source>
        <dbReference type="UniProtKB" id="P0DTD1"/>
    </source>
</evidence>
<evidence type="ECO:0000255" key="4"/>
<evidence type="ECO:0000255" key="5">
    <source>
        <dbReference type="PROSITE-ProRule" id="PRU00214"/>
    </source>
</evidence>
<evidence type="ECO:0000255" key="6">
    <source>
        <dbReference type="PROSITE-ProRule" id="PRU00444"/>
    </source>
</evidence>
<evidence type="ECO:0000255" key="7">
    <source>
        <dbReference type="PROSITE-ProRule" id="PRU00490"/>
    </source>
</evidence>
<evidence type="ECO:0000255" key="8">
    <source>
        <dbReference type="PROSITE-ProRule" id="PRU00772"/>
    </source>
</evidence>
<evidence type="ECO:0000255" key="9">
    <source>
        <dbReference type="PROSITE-ProRule" id="PRU00986"/>
    </source>
</evidence>
<evidence type="ECO:0000255" key="10">
    <source>
        <dbReference type="PROSITE-ProRule" id="PRU01291"/>
    </source>
</evidence>
<evidence type="ECO:0000255" key="11">
    <source>
        <dbReference type="PROSITE-ProRule" id="PRU01292"/>
    </source>
</evidence>
<evidence type="ECO:0000255" key="12">
    <source>
        <dbReference type="PROSITE-ProRule" id="PRU01293"/>
    </source>
</evidence>
<evidence type="ECO:0000255" key="13">
    <source>
        <dbReference type="PROSITE-ProRule" id="PRU01294"/>
    </source>
</evidence>
<evidence type="ECO:0000255" key="14">
    <source>
        <dbReference type="PROSITE-ProRule" id="PRU01295"/>
    </source>
</evidence>
<evidence type="ECO:0000255" key="15">
    <source>
        <dbReference type="PROSITE-ProRule" id="PRU01296"/>
    </source>
</evidence>
<evidence type="ECO:0000255" key="16">
    <source>
        <dbReference type="PROSITE-ProRule" id="PRU01297"/>
    </source>
</evidence>
<evidence type="ECO:0000255" key="17">
    <source>
        <dbReference type="PROSITE-ProRule" id="PRU01298"/>
    </source>
</evidence>
<evidence type="ECO:0000255" key="18">
    <source>
        <dbReference type="PROSITE-ProRule" id="PRU01299"/>
    </source>
</evidence>
<evidence type="ECO:0000255" key="19">
    <source>
        <dbReference type="PROSITE-ProRule" id="PRU01300"/>
    </source>
</evidence>
<evidence type="ECO:0000255" key="20">
    <source>
        <dbReference type="PROSITE-ProRule" id="PRU01303"/>
    </source>
</evidence>
<evidence type="ECO:0000255" key="21">
    <source>
        <dbReference type="PROSITE-ProRule" id="PRU01305"/>
    </source>
</evidence>
<evidence type="ECO:0000255" key="22">
    <source>
        <dbReference type="PROSITE-ProRule" id="PRU01306"/>
    </source>
</evidence>
<evidence type="ECO:0000255" key="23">
    <source>
        <dbReference type="PROSITE-ProRule" id="PRU01307"/>
    </source>
</evidence>
<evidence type="ECO:0000255" key="24">
    <source>
        <dbReference type="PROSITE-ProRule" id="PRU01333"/>
    </source>
</evidence>
<evidence type="ECO:0000255" key="25">
    <source>
        <dbReference type="PROSITE-ProRule" id="PRU01334"/>
    </source>
</evidence>
<evidence type="ECO:0000255" key="26">
    <source>
        <dbReference type="PROSITE-ProRule" id="PRU01335"/>
    </source>
</evidence>
<evidence type="ECO:0000255" key="27">
    <source>
        <dbReference type="PROSITE-ProRule" id="PRU01336"/>
    </source>
</evidence>
<evidence type="ECO:0000255" key="28">
    <source>
        <dbReference type="PROSITE-ProRule" id="PRU01337"/>
    </source>
</evidence>
<evidence type="ECO:0000255" key="29">
    <source>
        <dbReference type="PROSITE-ProRule" id="PRU01344"/>
    </source>
</evidence>
<evidence type="ECO:0000256" key="30">
    <source>
        <dbReference type="SAM" id="MobiDB-lite"/>
    </source>
</evidence>
<evidence type="ECO:0000269" key="31">
    <source>
    </source>
</evidence>
<evidence type="ECO:0000269" key="32">
    <source>
    </source>
</evidence>
<evidence type="ECO:0000305" key="33"/>
<evidence type="ECO:0007829" key="34">
    <source>
        <dbReference type="PDB" id="1LVO"/>
    </source>
</evidence>
<evidence type="ECO:0007829" key="35">
    <source>
        <dbReference type="PDB" id="2AMP"/>
    </source>
</evidence>
<evidence type="ECO:0007829" key="36">
    <source>
        <dbReference type="PDB" id="6IVC"/>
    </source>
</evidence>
<comment type="function">
    <text evidence="32">The replicase polyprotein of coronaviruses is a multifunctional protein: it contains the activities necessary for the transcription of negative stranded RNA, leader RNA, subgenomic mRNAs and progeny virion RNA as well as proteinases responsible for the cleavage of the polyprotein into functional products.</text>
</comment>
<comment type="function">
    <text evidence="32">Non-structural protein 1 inhibits host translation. By suppressing host gene expression, nsp1 facilitates efficient viral gene expression in infected cells and evasion from host immune response.</text>
</comment>
<comment type="function">
    <text evidence="1">The papain-like proteinase 1 (PLP1) and papain-like proteinase 2 (PLP2) are responsible for the cleavages located at the N-terminus of the replicase polyprotein. In addition, PLP2 possesses a deubiquitinating/deISGylating activity and processes both 'Lys-48'- and 'Lys-63'-linked polyubiquitin chains from cellular substrates. PLP2 also antagonizes innate immune induction of type I interferon by blocking the nuclear translocation of host IRF-3 (By similarity).</text>
</comment>
<comment type="function">
    <molecule>3C-like proteinase</molecule>
    <text evidence="32">Responsible for the majority of cleavages as it cleaves the C-terminus of replicase polyprotein at 11 sites. Recognizes substrates containing the core sequence [ILMVF]-Q-|-[SAGC]. Inhibited by the substrate-analog Cbz-Val-Asn-Ser-Thr-Leu-Gln-CMK.</text>
</comment>
<comment type="function">
    <text evidence="32">The helicase which contains a zinc finger structure displays RNA and DNA duplex-unwinding activities with 5' to 3' polarity. ATPase activity is strongly stimulated by poly(U), poly(dT), poly(C), poly(dA), but not by poly(G).</text>
</comment>
<comment type="function">
    <text evidence="1">The exoribonuclease acts on both ssRNA and dsRNA in a 3' to 5' direction.</text>
</comment>
<comment type="function">
    <text evidence="1">Nsp7-nsp8 hexadecamer may possibly confer processivity to the polymerase, maybe by binding to dsRNA or by producing primers utilized by the latter.</text>
</comment>
<comment type="function">
    <molecule>Viral protein genome-linked nsp9</molecule>
    <text evidence="3">Forms a primer, NSP9-pU, which is utilized by the polymerase for the initiation of RNA chains. Interacts with ribosome signal recognition particle RNA (SRP). Together with NSP8, suppress protein integration into the cell membrane, thereby disrupting host immune defenses.</text>
</comment>
<comment type="function">
    <molecule>RNA-directed RNA polymerase nsp12</molecule>
    <text evidence="3">RNA-directed RNA polymerase that catalyzes the transcription of viral genomic and subgenomic RNAs. Acts in complex with nsp7 and nsp8 to transcribe both the minus and positive strands of genomic RNA. The kinase-like NiRAN domain of NSP12 attaches one or more nucleotides to the amino terminus of NSP9, forming a covalent RNA-protein intermediate that serves as transcription/replication primer. Subgenomic RNAs (sgRNAs) are formed by discontinuous transcription: The polymerase has the ability to pause at transcription-regulating sequences (TRS) and jump to the leader TRS, resulting in a major deletion. This creates a series of subgenomic RNAs that are replicated, transcribed and translated. In addition, Nsp12 is a subunit of the viral RNA capping enzyme that catalyzes the RNA guanylyltransferase reaction for genomic and sub-genomic RNAs. Subsequently, the NiRAN domain transfers RNA to GDP, and forms the core cap structure GpppA-RNA.</text>
</comment>
<comment type="function">
    <molecule>Uridylate-specific endoribonuclease</molecule>
    <text evidence="2">Plays a role in viral transcription/replication and prevents the simultaneous activation of host cell dsRNA sensors, such as MDA5/IFIH1, OAS, and PKR (By similarity). Acts by degrading the 5'-polyuridines generated during replication of the poly(A) region of viral genomic and subgenomic RNAs. Catalyzes a two-step reaction in which a 2'3'-cyclic phosphate (2'3'-cP) is first generated by 2'-O transesterification, which is then hydrolyzed to a 3'-phosphate (3'-P) (By similarity). If not degraded, poly(U) RNA would hybridize with poly(A) RNA tails and activate host dsRNA sensors (By similarity).</text>
</comment>
<comment type="catalytic activity">
    <molecule>Non-structural protein 3</molecule>
    <reaction>
        <text>Thiol-dependent hydrolysis of ester, thioester, amide, peptide and isopeptide bonds formed by the C-terminal Gly of ubiquitin (a 76-residue protein attached to proteins as an intracellular targeting signal).</text>
        <dbReference type="EC" id="3.4.19.12"/>
    </reaction>
</comment>
<comment type="catalytic activity">
    <molecule>RNA-directed RNA polymerase nsp12</molecule>
    <reaction>
        <text>RNA(n) + a ribonucleoside 5'-triphosphate = RNA(n+1) + diphosphate</text>
        <dbReference type="Rhea" id="RHEA:21248"/>
        <dbReference type="Rhea" id="RHEA-COMP:14527"/>
        <dbReference type="Rhea" id="RHEA-COMP:17342"/>
        <dbReference type="ChEBI" id="CHEBI:33019"/>
        <dbReference type="ChEBI" id="CHEBI:61557"/>
        <dbReference type="ChEBI" id="CHEBI:140395"/>
        <dbReference type="EC" id="2.7.7.48"/>
    </reaction>
</comment>
<comment type="catalytic activity">
    <molecule>Helicase</molecule>
    <reaction>
        <text>ATP + H2O = ADP + phosphate + H(+)</text>
        <dbReference type="Rhea" id="RHEA:13065"/>
        <dbReference type="ChEBI" id="CHEBI:15377"/>
        <dbReference type="ChEBI" id="CHEBI:15378"/>
        <dbReference type="ChEBI" id="CHEBI:30616"/>
        <dbReference type="ChEBI" id="CHEBI:43474"/>
        <dbReference type="ChEBI" id="CHEBI:456216"/>
        <dbReference type="EC" id="3.6.4.12"/>
    </reaction>
</comment>
<comment type="catalytic activity">
    <molecule>Helicase</molecule>
    <reaction>
        <text>ATP + H2O = ADP + phosphate + H(+)</text>
        <dbReference type="Rhea" id="RHEA:13065"/>
        <dbReference type="ChEBI" id="CHEBI:15377"/>
        <dbReference type="ChEBI" id="CHEBI:15378"/>
        <dbReference type="ChEBI" id="CHEBI:30616"/>
        <dbReference type="ChEBI" id="CHEBI:43474"/>
        <dbReference type="ChEBI" id="CHEBI:456216"/>
        <dbReference type="EC" id="3.6.4.13"/>
    </reaction>
</comment>
<comment type="catalytic activity">
    <molecule>RNA-directed RNA polymerase nsp12</molecule>
    <reaction evidence="3">
        <text>a 5'-end diphospho-ribonucleoside in mRNA + GTP + H(+) = a 5'-end (5'-triphosphoguanosine)-ribonucleoside in mRNA + diphosphate</text>
        <dbReference type="Rhea" id="RHEA:67012"/>
        <dbReference type="Rhea" id="RHEA-COMP:17165"/>
        <dbReference type="Rhea" id="RHEA-COMP:17166"/>
        <dbReference type="ChEBI" id="CHEBI:15378"/>
        <dbReference type="ChEBI" id="CHEBI:33019"/>
        <dbReference type="ChEBI" id="CHEBI:37565"/>
        <dbReference type="ChEBI" id="CHEBI:167616"/>
        <dbReference type="ChEBI" id="CHEBI:167617"/>
        <dbReference type="EC" id="2.7.7.50"/>
    </reaction>
    <physiologicalReaction direction="left-to-right" evidence="3">
        <dbReference type="Rhea" id="RHEA:67013"/>
    </physiologicalReaction>
</comment>
<comment type="catalytic activity">
    <molecule>Putative 2'-O-methyl transferase</molecule>
    <reaction evidence="2">
        <text>a 5'-end (N(7)-methyl 5'-triphosphoguanosine)-ribonucleoside in mRNA + S-adenosyl-L-methionine = a 5'-end (N(7)-methyl 5'-triphosphoguanosine)-(2'-O-methyl-ribonucleoside) in mRNA + S-adenosyl-L-homocysteine + H(+)</text>
        <dbReference type="Rhea" id="RHEA:67020"/>
        <dbReference type="Rhea" id="RHEA-COMP:17167"/>
        <dbReference type="Rhea" id="RHEA-COMP:17168"/>
        <dbReference type="ChEBI" id="CHEBI:15378"/>
        <dbReference type="ChEBI" id="CHEBI:57856"/>
        <dbReference type="ChEBI" id="CHEBI:59789"/>
        <dbReference type="ChEBI" id="CHEBI:156461"/>
        <dbReference type="ChEBI" id="CHEBI:167609"/>
        <dbReference type="EC" id="2.1.1.57"/>
    </reaction>
</comment>
<comment type="catalytic activity">
    <molecule>Uridylate-specific endoribonuclease</molecule>
    <reaction evidence="2">
        <text>uridylyl-uridylyl-ribonucleotide-RNA = a 3'-end uridylyl-2',3'-cyclophospho-uridine-RNA + a 5'-end dephospho-ribonucleoside-RNA</text>
        <dbReference type="Rhea" id="RHEA:67732"/>
        <dbReference type="Rhea" id="RHEA-COMP:13936"/>
        <dbReference type="Rhea" id="RHEA-COMP:17334"/>
        <dbReference type="Rhea" id="RHEA-COMP:17335"/>
        <dbReference type="ChEBI" id="CHEBI:138284"/>
        <dbReference type="ChEBI" id="CHEBI:173079"/>
        <dbReference type="ChEBI" id="CHEBI:173080"/>
    </reaction>
</comment>
<comment type="cofactor">
    <molecule>Uridylate-specific endoribonuclease</molecule>
    <cofactor evidence="2">
        <name>Mn(2+)</name>
        <dbReference type="ChEBI" id="CHEBI:29035"/>
    </cofactor>
    <text evidence="2">Likely affects Nsp15 binding to RNA.</text>
</comment>
<comment type="subunit">
    <text evidence="1">3CL-PRO exists as monomer and homodimer. Eight copies of nsp7 and eight copies of nsp8 assemble to form a heterohexadecamer. Nsp9 is a dimer. Nsp10 forms a dodecamer (By similarity).</text>
</comment>
<comment type="interaction">
    <interactant intactId="EBI-26366034">
        <id>PRO_0000037392</id>
    </interactant>
    <interactant intactId="EBI-25684354">
        <id>PRO_0000037393</id>
        <label>rep</label>
        <dbReference type="UniProtKB" id="P0C6Y5"/>
    </interactant>
    <organismsDiffer>false</organismsDiffer>
    <experiments>2</experiments>
</comment>
<comment type="subcellular location">
    <molecule>Non-structural protein 3</molecule>
    <subcellularLocation>
        <location evidence="33">Host membrane</location>
        <topology evidence="33">Multi-pass membrane protein</topology>
    </subcellularLocation>
</comment>
<comment type="subcellular location">
    <molecule>Non-structural protein 4</molecule>
    <subcellularLocation>
        <location evidence="33">Host membrane</location>
        <topology evidence="33">Multi-pass membrane protein</topology>
    </subcellularLocation>
</comment>
<comment type="subcellular location">
    <molecule>Non-structural protein 6</molecule>
    <subcellularLocation>
        <location evidence="33">Host membrane</location>
        <topology evidence="33">Multi-pass membrane protein</topology>
    </subcellularLocation>
</comment>
<comment type="subcellular location">
    <molecule>Non-structural protein 7</molecule>
    <subcellularLocation>
        <location evidence="1">Host cytoplasm</location>
        <location evidence="1">Host perinuclear region</location>
    </subcellularLocation>
    <text evidence="1">nsp7, nsp8, nsp9 and nsp10 are localized in cytoplasmic foci, largely perinuclear. Late in infection, they merge into confluent complexes (By similarity).</text>
</comment>
<comment type="subcellular location">
    <molecule>Non-structural protein 8</molecule>
    <subcellularLocation>
        <location evidence="1">Host cytoplasm</location>
        <location evidence="1">Host perinuclear region</location>
    </subcellularLocation>
    <text evidence="1">nsp7, nsp8, nsp9 and nsp10 are localized in cytoplasmic foci, largely perinuclear. Late in infection, they merge into confluent complexes (By similarity).</text>
</comment>
<comment type="subcellular location">
    <molecule>Viral protein genome-linked nsp9</molecule>
    <subcellularLocation>
        <location evidence="1">Host cytoplasm</location>
        <location evidence="1">Host perinuclear region</location>
    </subcellularLocation>
    <text evidence="1">nsp7, nsp8, nsp9 and nsp10 are localized in cytoplasmic foci, largely perinuclear. Late in infection, they merge into confluent complexes (By similarity).</text>
</comment>
<comment type="subcellular location">
    <molecule>Non-structural protein 10</molecule>
    <subcellularLocation>
        <location evidence="1">Host cytoplasm</location>
        <location evidence="1">Host perinuclear region</location>
    </subcellularLocation>
    <text evidence="1">nsp7, nsp8, nsp9 and nsp10 are localized in cytoplasmic foci, largely perinuclear. Late in infection, they merge into confluent complexes (By similarity).</text>
</comment>
<comment type="subcellular location">
    <molecule>Helicase</molecule>
    <subcellularLocation>
        <location evidence="33">Host endoplasmic reticulum-Golgi intermediate compartment</location>
    </subcellularLocation>
    <text evidence="1">The helicase interacts with the N protein in membranous complexes and colocalizes with sites of synthesis of new viral RNA.</text>
</comment>
<comment type="subcellular location">
    <molecule>Uridylate-specific endoribonuclease</molecule>
    <subcellularLocation>
        <location evidence="1">Host cytoplasm</location>
        <location evidence="1">Host perinuclear region</location>
    </subcellularLocation>
</comment>
<comment type="alternative products">
    <event type="ribosomal frameshifting"/>
    <isoform>
        <id>P0C6Y5-1</id>
        <name>Replicase polyprotein 1ab</name>
        <name>pp1ab</name>
        <sequence type="displayed"/>
    </isoform>
    <isoform>
        <id>P0C6V2-1</id>
        <name>Replicase polyprotein 1a</name>
        <name>pp1a</name>
        <name>ORF1a polyprotein</name>
        <sequence type="external"/>
    </isoform>
</comment>
<comment type="domain">
    <text>The hydrophobic domains (HD) could mediate the membrane association of the replication complex and thereby alter the architecture of the host cell membrane.</text>
</comment>
<comment type="PTM">
    <text evidence="31">Specific enzymatic cleavages in vivo by its own proteases yield mature proteins. 3CL-PRO is autocatalytically processed.</text>
</comment>
<comment type="miscellaneous">
    <molecule>Isoform Replicase polyprotein 1ab</molecule>
    <text>Produced by -1 ribosomal frameshifting at the 1a-1b genes boundary.</text>
</comment>
<comment type="similarity">
    <text evidence="33">Belongs to the coronaviruses polyprotein 1ab family.</text>
</comment>
<name>R1AB_CVPPU</name>